<evidence type="ECO:0000255" key="1"/>
<evidence type="ECO:0000255" key="2">
    <source>
        <dbReference type="PROSITE-ProRule" id="PRU00114"/>
    </source>
</evidence>
<evidence type="ECO:0000256" key="3">
    <source>
        <dbReference type="SAM" id="MobiDB-lite"/>
    </source>
</evidence>
<evidence type="ECO:0000269" key="4">
    <source>
    </source>
</evidence>
<evidence type="ECO:0000269" key="5">
    <source>
    </source>
</evidence>
<evidence type="ECO:0000269" key="6">
    <source>
    </source>
</evidence>
<evidence type="ECO:0000269" key="7">
    <source>
    </source>
</evidence>
<evidence type="ECO:0000269" key="8">
    <source>
    </source>
</evidence>
<evidence type="ECO:0000269" key="9">
    <source>
    </source>
</evidence>
<evidence type="ECO:0000269" key="10">
    <source>
    </source>
</evidence>
<evidence type="ECO:0000269" key="11">
    <source>
    </source>
</evidence>
<evidence type="ECO:0000269" key="12">
    <source>
    </source>
</evidence>
<evidence type="ECO:0000303" key="13">
    <source>
    </source>
</evidence>
<evidence type="ECO:0000303" key="14">
    <source>
    </source>
</evidence>
<evidence type="ECO:0000303" key="15">
    <source>
    </source>
</evidence>
<evidence type="ECO:0000303" key="16">
    <source>
    </source>
</evidence>
<evidence type="ECO:0000303" key="17">
    <source>
    </source>
</evidence>
<evidence type="ECO:0000303" key="18">
    <source>
    </source>
</evidence>
<evidence type="ECO:0000303" key="19">
    <source ref="13"/>
</evidence>
<evidence type="ECO:0000305" key="20"/>
<evidence type="ECO:0000305" key="21">
    <source>
    </source>
</evidence>
<evidence type="ECO:0000305" key="22">
    <source>
    </source>
</evidence>
<evidence type="ECO:0000305" key="23">
    <source>
    </source>
</evidence>
<evidence type="ECO:0000305" key="24">
    <source>
    </source>
</evidence>
<evidence type="ECO:0007829" key="25">
    <source>
        <dbReference type="PDB" id="1FCC"/>
    </source>
</evidence>
<evidence type="ECO:0007829" key="26">
    <source>
        <dbReference type="PDB" id="1HZH"/>
    </source>
</evidence>
<evidence type="ECO:0007829" key="27">
    <source>
        <dbReference type="PDB" id="1L6X"/>
    </source>
</evidence>
<evidence type="ECO:0007829" key="28">
    <source>
        <dbReference type="PDB" id="3SGJ"/>
    </source>
</evidence>
<evidence type="ECO:0007829" key="29">
    <source>
        <dbReference type="PDB" id="3V8C"/>
    </source>
</evidence>
<evidence type="ECO:0007829" key="30">
    <source>
        <dbReference type="PDB" id="4LLD"/>
    </source>
</evidence>
<evidence type="ECO:0007829" key="31">
    <source>
        <dbReference type="PDB" id="5DI8"/>
    </source>
</evidence>
<evidence type="ECO:0007829" key="32">
    <source>
        <dbReference type="PDB" id="5GSQ"/>
    </source>
</evidence>
<evidence type="ECO:0007829" key="33">
    <source>
        <dbReference type="PDB" id="5HSF"/>
    </source>
</evidence>
<evidence type="ECO:0007829" key="34">
    <source>
        <dbReference type="PDB" id="5IQ7"/>
    </source>
</evidence>
<evidence type="ECO:0007829" key="35">
    <source>
        <dbReference type="PDB" id="5IW3"/>
    </source>
</evidence>
<evidence type="ECO:0007829" key="36">
    <source>
        <dbReference type="PDB" id="5M3V"/>
    </source>
</evidence>
<evidence type="ECO:0007829" key="37">
    <source>
        <dbReference type="PDB" id="7WSO"/>
    </source>
</evidence>
<reference key="1">
    <citation type="journal article" date="1982" name="Cell">
        <title>Structure of human immunoglobulin gamma genes: implications for evolution of a gene family.</title>
        <authorList>
            <person name="Takahashi N."/>
            <person name="Ueda S."/>
            <person name="Obata M."/>
            <person name="Nikaido T."/>
            <person name="Nakai S."/>
            <person name="Honjo T."/>
        </authorList>
    </citation>
    <scope>NUCLEOTIDE SEQUENCE [GENOMIC DNA] (IMGT ALLELE IGHG1*01) (ISOFORM 1)</scope>
</reference>
<reference key="2">
    <citation type="journal article" date="1982" name="Nucleic Acids Res.">
        <title>The nucleotide sequence of a human immunoglobulin C gamma1 gene.</title>
        <authorList>
            <person name="Ellison J.W."/>
            <person name="Berson B.J."/>
            <person name="Hood L.E."/>
        </authorList>
    </citation>
    <scope>NUCLEOTIDE SEQUENCE [GENOMIC DNA] (ISOFORM 1)</scope>
</reference>
<reference key="3">
    <citation type="journal article" date="2003" name="Nature">
        <title>The DNA sequence and analysis of human chromosome 14.</title>
        <authorList>
            <person name="Heilig R."/>
            <person name="Eckenberg R."/>
            <person name="Petit J.-L."/>
            <person name="Fonknechten N."/>
            <person name="Da Silva C."/>
            <person name="Cattolico L."/>
            <person name="Levy M."/>
            <person name="Barbe V."/>
            <person name="De Berardinis V."/>
            <person name="Ureta-Vidal A."/>
            <person name="Pelletier E."/>
            <person name="Vico V."/>
            <person name="Anthouard V."/>
            <person name="Rowen L."/>
            <person name="Madan A."/>
            <person name="Qin S."/>
            <person name="Sun H."/>
            <person name="Du H."/>
            <person name="Pepin K."/>
            <person name="Artiguenave F."/>
            <person name="Robert C."/>
            <person name="Cruaud C."/>
            <person name="Bruels T."/>
            <person name="Jaillon O."/>
            <person name="Friedlander L."/>
            <person name="Samson G."/>
            <person name="Brottier P."/>
            <person name="Cure S."/>
            <person name="Segurens B."/>
            <person name="Aniere F."/>
            <person name="Samain S."/>
            <person name="Crespeau H."/>
            <person name="Abbasi N."/>
            <person name="Aiach N."/>
            <person name="Boscus D."/>
            <person name="Dickhoff R."/>
            <person name="Dors M."/>
            <person name="Dubois I."/>
            <person name="Friedman C."/>
            <person name="Gouyvenoux M."/>
            <person name="James R."/>
            <person name="Madan A."/>
            <person name="Mairey-Estrada B."/>
            <person name="Mangenot S."/>
            <person name="Martins N."/>
            <person name="Menard M."/>
            <person name="Oztas S."/>
            <person name="Ratcliffe A."/>
            <person name="Shaffer T."/>
            <person name="Trask B."/>
            <person name="Vacherie B."/>
            <person name="Bellemere C."/>
            <person name="Belser C."/>
            <person name="Besnard-Gonnet M."/>
            <person name="Bartol-Mavel D."/>
            <person name="Boutard M."/>
            <person name="Briez-Silla S."/>
            <person name="Combette S."/>
            <person name="Dufosse-Laurent V."/>
            <person name="Ferron C."/>
            <person name="Lechaplais C."/>
            <person name="Louesse C."/>
            <person name="Muselet D."/>
            <person name="Magdelenat G."/>
            <person name="Pateau E."/>
            <person name="Petit E."/>
            <person name="Sirvain-Trukniewicz P."/>
            <person name="Trybou A."/>
            <person name="Vega-Czarny N."/>
            <person name="Bataille E."/>
            <person name="Bluet E."/>
            <person name="Bordelais I."/>
            <person name="Dubois M."/>
            <person name="Dumont C."/>
            <person name="Guerin T."/>
            <person name="Haffray S."/>
            <person name="Hammadi R."/>
            <person name="Muanga J."/>
            <person name="Pellouin V."/>
            <person name="Robert D."/>
            <person name="Wunderle E."/>
            <person name="Gauguet G."/>
            <person name="Roy A."/>
            <person name="Sainte-Marthe L."/>
            <person name="Verdier J."/>
            <person name="Verdier-Discala C."/>
            <person name="Hillier L.W."/>
            <person name="Fulton L."/>
            <person name="McPherson J."/>
            <person name="Matsuda F."/>
            <person name="Wilson R."/>
            <person name="Scarpelli C."/>
            <person name="Gyapay G."/>
            <person name="Wincker P."/>
            <person name="Saurin W."/>
            <person name="Quetier F."/>
            <person name="Waterston R."/>
            <person name="Hood L."/>
            <person name="Weissenbach J."/>
        </authorList>
    </citation>
    <scope>NUCLEOTIDE SEQUENCE [LARGE SCALE GENOMIC DNA] (IMGT ALLELE IGHG1*05) (ISOFORMS 1 AND 2)</scope>
</reference>
<reference key="4">
    <citation type="journal article" date="1991" name="Immunol. Lett.">
        <title>The membrane exons of the pseudo-gamma-chain gene of the human immunoglobulin are apparently functional and highly homologous to those of the gamma 1 gene.</title>
        <authorList>
            <person name="Kinoshita K."/>
            <person name="Shimizu A."/>
            <person name="Honjo T."/>
        </authorList>
    </citation>
    <scope>NUCLEOTIDE SEQUENCE [MRNA] OF 329-399 (ISOFORM 2)</scope>
</reference>
<reference key="5">
    <citation type="journal article" date="1976" name="Hoppe-Seyler's Z. Physiol. Chem.">
        <title>The rule of antibody structure. The primary structure of a monoclonal IgG1 immunoglobulin (myeloma protein Nie). III. The chymotryptic peptides of the H-chain, alignment of the tryptic peptides and discussion of the complete structure.</title>
        <authorList>
            <person name="Ponstingl H."/>
            <person name="Hilschmann N."/>
        </authorList>
    </citation>
    <scope>PROTEIN SEQUENCE</scope>
</reference>
<reference key="6">
    <citation type="journal article" date="1983" name="Hoppe-Seyler's Z. Physiol. Chem.">
        <title>Three-dimensional structure determination of antibodies. Primary structure of crystallized monoclonal immunoglobulin IgG1 KOL, I.</title>
        <authorList>
            <person name="Schmidt W.E."/>
            <person name="Jung H.-D."/>
            <person name="Palm W."/>
            <person name="Hilschmann N."/>
        </authorList>
    </citation>
    <scope>PROTEIN SEQUENCE (IMGT ALLELE IGHG1*03)</scope>
    <scope>DISULFIDE BONDS</scope>
    <scope>VARIANTS ARG-97; GLU-239 AND MET-241</scope>
</reference>
<reference key="7">
    <citation type="journal article" date="1970" name="Biochemistry">
        <title>The covalent structure of a human gamma G-immunoglobulin. VII. Amino acid sequence of heavy-chain cyanogen bromide fragments H1-H4.</title>
        <authorList>
            <person name="Cunningham B.A."/>
            <person name="Rutishauser U."/>
            <person name="Gall W.E."/>
            <person name="Gottlieb P.D."/>
            <person name="Waxdal M.J."/>
            <person name="Edelman G.M."/>
        </authorList>
    </citation>
    <scope>PROTEIN SEQUENCE OF 1-135 (IMGT ALLELE IGHG1*03)</scope>
    <scope>VARIANT ARG-97</scope>
</reference>
<reference key="8">
    <citation type="journal article" date="1970" name="Biochemistry">
        <title>The covalent structure of a human gamma G-immunoglobulin. 8. Amino acid sequence of heavy-chain cyanogen bromide fragments H5-H7.</title>
        <authorList>
            <person name="Rutishauser U."/>
            <person name="Cunningham B.A."/>
            <person name="Bennett C."/>
            <person name="Konigsberg W.H."/>
            <person name="Edelman G.M."/>
        </authorList>
    </citation>
    <scope>PROTEIN SEQUENCE OF 136-329 (IMGT ALLELE IGHG1*03)</scope>
    <scope>VARIANTS GLU-239 AND MET-241</scope>
</reference>
<reference key="9">
    <citation type="journal article" date="1970" name="Biochemistry">
        <title>The covalent structure of a human gamma G-immunoglobulin. X. Intrachain disulfide bonds.</title>
        <authorList>
            <person name="Gall W.E."/>
            <person name="Edelman G.M."/>
        </authorList>
    </citation>
    <scope>DISULFIDE BONDS</scope>
</reference>
<reference key="10">
    <citation type="journal article" date="1976" name="Hoppe-Seyler's Z. Physiol. Chem.">
        <title>Rule of antibody structure. The primary structure of a monoclonal IgG1 immunoglobulin (myeloma protein Nie), I: purification and characterization of the protein, the L- and H-chains, the cyanogen bromide cleavage products, and the disulfide bridges.</title>
        <authorList>
            <person name="Dreker L."/>
            <person name="Schwarz J."/>
            <person name="Reichel W."/>
            <person name="Hilschmann N."/>
        </authorList>
    </citation>
    <scope>DISULFIDE BONDS</scope>
</reference>
<reference key="11">
    <citation type="journal article" date="2001" name="EMBO J.">
        <title>EndoS, a novel secreted protein from Streptococcus pyogenes with endoglycosidase activity on human IgG.</title>
        <authorList>
            <person name="Collin M."/>
            <person name="Olsen A."/>
        </authorList>
    </citation>
    <scope>GLYCOSYLATION AT ASN-180</scope>
    <scope>DEGLYCOSYLATION (MICROBIAL INFECTION)</scope>
</reference>
<reference key="12">
    <citation type="journal article" date="2001" name="Exp. Clin. Immunogenet.">
        <title>Nomenclature of the human immunoglobulin heavy (IGH) genes.</title>
        <authorList>
            <person name="Lefranc M.P."/>
        </authorList>
    </citation>
    <scope>NOMENCLATURE</scope>
</reference>
<reference key="13">
    <citation type="book" date="2001" name="The Immunoglobulin FactsBook.">
        <title>The Immunoglobulin FactsBook.</title>
        <editorList>
            <person name="Lefranc M.P."/>
            <person name="Lefranc G."/>
        </editorList>
        <authorList>
            <person name="Lefranc M.P."/>
            <person name="Lefranc G."/>
        </authorList>
    </citation>
    <scope>NOMENCLATURE</scope>
</reference>
<reference key="14">
    <citation type="journal article" date="2001" name="J. Virol.">
        <title>Effector function activities of a panel of mutants of a broadly neutralizing antibody against human immunodeficiency virus type 1.</title>
        <authorList>
            <person name="Hezareh M."/>
            <person name="Hessell A.J."/>
            <person name="Jensen R.C."/>
            <person name="van de Winkel J.G."/>
            <person name="Parren P.W."/>
        </authorList>
    </citation>
    <scope>FUNCTION</scope>
    <scope>INTERACTION WITH FCGR1A; FCGR2A AND FCGR3A</scope>
    <scope>MUTAGENESIS OF LEU-117; LEU-118; 117-LEU-LEU-118; GLY-120 AND LYS-205</scope>
</reference>
<reference key="15">
    <citation type="journal article" date="2007" name="Annu. Rev. Genet.">
        <title>Immunoglobulin somatic hypermutation.</title>
        <authorList>
            <person name="Teng G."/>
            <person name="Papavasiliou F.N."/>
        </authorList>
    </citation>
    <scope>REVIEW ON SOMATIC HYPERMUTATION</scope>
</reference>
<reference key="16">
    <citation type="journal article" date="2009" name="Anal. Chem.">
        <title>Site-specific glycoprofiling of N-linked glycopeptides using MALDI-TOF MS: strong correlation between signal strength and glycoform quantities.</title>
        <authorList>
            <person name="Thaysen-Andersen M."/>
            <person name="Mysling S."/>
            <person name="Hojrup P."/>
        </authorList>
    </citation>
    <scope>GLYCOSYLATION AT ASN-180</scope>
</reference>
<reference key="17">
    <citation type="journal article" date="2009" name="J. Proteome Res.">
        <title>Glycoproteomics analysis of human liver tissue by combination of multiple enzyme digestion and hydrazide chemistry.</title>
        <authorList>
            <person name="Chen R."/>
            <person name="Jiang X."/>
            <person name="Sun D."/>
            <person name="Han G."/>
            <person name="Wang F."/>
            <person name="Ye M."/>
            <person name="Wang L."/>
            <person name="Zou H."/>
        </authorList>
    </citation>
    <scope>GLYCOSYLATION [LARGE SCALE ANALYSIS] AT ASN-180</scope>
    <source>
        <tissue>Liver</tissue>
    </source>
</reference>
<reference key="18">
    <citation type="journal article" date="2009" name="Mol. Cell. Proteomics">
        <title>A strategy for precise and large scale identification of core fucosylated glycoproteins.</title>
        <authorList>
            <person name="Jia W."/>
            <person name="Lu Z."/>
            <person name="Fu Y."/>
            <person name="Wang H.P."/>
            <person name="Wang L.H."/>
            <person name="Chi H."/>
            <person name="Yuan Z.F."/>
            <person name="Zheng Z.B."/>
            <person name="Song L.N."/>
            <person name="Han H.H."/>
            <person name="Liang Y.M."/>
            <person name="Wang J.L."/>
            <person name="Cai Y."/>
            <person name="Zhang Y.K."/>
            <person name="Deng Y.L."/>
            <person name="Ying W.T."/>
            <person name="He S.M."/>
            <person name="Qian X.H."/>
        </authorList>
    </citation>
    <scope>GLYCOSYLATION AT ASN-180</scope>
</reference>
<reference key="19">
    <citation type="journal article" date="2010" name="Blood">
        <title>The IgG-specific endoglycosidase EndoS inhibits both cellular and complement-mediated autoimmune hemolysis.</title>
        <authorList>
            <person name="Allhorn M."/>
            <person name="Briceno J.G."/>
            <person name="Baudino L."/>
            <person name="Lood C."/>
            <person name="Olsson M.L."/>
            <person name="Izui S."/>
            <person name="Collin M."/>
        </authorList>
    </citation>
    <scope>GLYCOSYLATION AT ASN-180</scope>
    <scope>DEGLYCOSYLATION (MICROBIAL INFECTION)</scope>
</reference>
<reference key="20">
    <citation type="journal article" date="2010" name="J. Allergy Clin. Immunol.">
        <title>Structure and function of immunoglobulins.</title>
        <authorList>
            <person name="Schroeder H.W. Jr."/>
            <person name="Cavacini L."/>
        </authorList>
    </citation>
    <scope>REVIEW ON IMMUNOGLOBULINS</scope>
</reference>
<reference key="21">
    <citation type="journal article" date="2011" name="BMC Syst. Biol.">
        <title>Initial characterization of the human central proteome.</title>
        <authorList>
            <person name="Burkard T.R."/>
            <person name="Planyavsky M."/>
            <person name="Kaupe I."/>
            <person name="Breitwieser F.P."/>
            <person name="Buerckstuemmer T."/>
            <person name="Bennett K.L."/>
            <person name="Superti-Furga G."/>
            <person name="Colinge J."/>
        </authorList>
    </citation>
    <scope>IDENTIFICATION BY MASS SPECTROMETRY [LARGE SCALE ANALYSIS]</scope>
</reference>
<reference key="22">
    <citation type="journal article" date="2012" name="Nat. Rev. Immunol.">
        <title>Molecular programming of B cell memory.</title>
        <authorList>
            <person name="McHeyzer-Williams M."/>
            <person name="Okitsu S."/>
            <person name="Wang N."/>
            <person name="McHeyzer-Williams L."/>
        </authorList>
    </citation>
    <scope>REVIEW ON FUNCTION</scope>
</reference>
<reference key="23">
    <citation type="journal article" date="2013" name="Biochem. J.">
        <title>EndoS2 is a unique and conserved enzyme of serotype M49 group A Streptococcus that hydrolyses N-linked glycans on IgG and alpha1-acid glycoprotein.</title>
        <authorList>
            <person name="Sjoegren J."/>
            <person name="Struwe W.B."/>
            <person name="Cosgrave E.F."/>
            <person name="Rudd P.M."/>
            <person name="Stervander M."/>
            <person name="Allhorn M."/>
            <person name="Hollands A."/>
            <person name="Nizet V."/>
            <person name="Collin M."/>
        </authorList>
    </citation>
    <scope>DEGLYCOSYLATION (MICROBIAL INFECTION)</scope>
</reference>
<reference key="24">
    <citation type="journal article" date="2014" name="J. Proteomics">
        <title>An enzyme assisted RP-RPLC approach for in-depth analysis of human liver phosphoproteome.</title>
        <authorList>
            <person name="Bian Y."/>
            <person name="Song C."/>
            <person name="Cheng K."/>
            <person name="Dong M."/>
            <person name="Wang F."/>
            <person name="Huang J."/>
            <person name="Sun D."/>
            <person name="Wang L."/>
            <person name="Ye M."/>
            <person name="Zou H."/>
        </authorList>
    </citation>
    <scope>IDENTIFICATION BY MASS SPECTROMETRY [LARGE SCALE ANALYSIS]</scope>
    <source>
        <tissue>Liver</tissue>
    </source>
</reference>
<reference key="25">
    <citation type="journal article" date="2015" name="Proteomics">
        <title>N-terminome analysis of the human mitochondrial proteome.</title>
        <authorList>
            <person name="Vaca Jacome A.S."/>
            <person name="Rabilloud T."/>
            <person name="Schaeffer-Reiss C."/>
            <person name="Rompais M."/>
            <person name="Ayoub D."/>
            <person name="Lane L."/>
            <person name="Bairoch A."/>
            <person name="Van Dorsselaer A."/>
            <person name="Carapito C."/>
        </authorList>
    </citation>
    <scope>IDENTIFICATION BY MASS SPECTROMETRY [LARGE SCALE ANALYSIS]</scope>
</reference>
<reference key="26">
    <citation type="journal article" date="1981" name="Biochemistry">
        <title>Crystallographic refinement and atomic models of a human Fc fragment and its complex with fragment B of protein A from Staphylococcus aureus at 2.9- and 2.8-A resolution.</title>
        <authorList>
            <person name="Deisenhofer J."/>
        </authorList>
    </citation>
    <scope>X-RAY CRYSTALLOGRAPHY (2.9 ANGSTROMS)</scope>
</reference>
<reference key="27">
    <citation type="journal article" date="1996" name="Proc. Natl. Acad. Sci. U.S.A.">
        <title>Promiscuous translocations into immunoglobulin heavy chain switch regions in multiple myeloma.</title>
        <authorList>
            <person name="Bergsagel P.L."/>
            <person name="Chesi M."/>
            <person name="Nardini E."/>
            <person name="Brents L.A."/>
            <person name="Kirby S.L."/>
            <person name="Kuehl W.M."/>
        </authorList>
    </citation>
    <scope>INVOLVEMENT IN MULTIPLE MYELOMA</scope>
</reference>
<reference key="28">
    <citation type="journal article" date="2002" name="Br. J. Haematol.">
        <title>Translocations of 14q32 and deletions of 13q14 are common chromosomal abnormalities in systemic amyloidosis.</title>
        <authorList>
            <person name="Harrison C.J."/>
            <person name="Mazzullo H."/>
            <person name="Ross F.M."/>
            <person name="Cheung K.L."/>
            <person name="Gerrard G."/>
            <person name="Harewood L."/>
            <person name="Mehta A."/>
            <person name="Lachmann H.J."/>
            <person name="Hawkins P.N."/>
            <person name="Orchard K.H."/>
        </authorList>
    </citation>
    <scope>INVOLVEMENT IN MULTIPLE MYELOMA</scope>
</reference>
<gene>
    <name evidence="13 19" type="primary">IGHG1</name>
</gene>
<keyword id="KW-0002">3D-structure</keyword>
<keyword id="KW-1064">Adaptive immunity</keyword>
<keyword id="KW-0025">Alternative splicing</keyword>
<keyword id="KW-1003">Cell membrane</keyword>
<keyword id="KW-0160">Chromosomal rearrangement</keyword>
<keyword id="KW-0903">Direct protein sequencing</keyword>
<keyword id="KW-1015">Disulfide bond</keyword>
<keyword id="KW-0325">Glycoprotein</keyword>
<keyword id="KW-0391">Immunity</keyword>
<keyword id="KW-1280">Immunoglobulin</keyword>
<keyword id="KW-0393">Immunoglobulin domain</keyword>
<keyword id="KW-0472">Membrane</keyword>
<keyword id="KW-1267">Proteomics identification</keyword>
<keyword id="KW-1185">Reference proteome</keyword>
<keyword id="KW-0964">Secreted</keyword>
<keyword id="KW-0812">Transmembrane</keyword>
<keyword id="KW-1133">Transmembrane helix</keyword>
<organism>
    <name type="scientific">Homo sapiens</name>
    <name type="common">Human</name>
    <dbReference type="NCBI Taxonomy" id="9606"/>
    <lineage>
        <taxon>Eukaryota</taxon>
        <taxon>Metazoa</taxon>
        <taxon>Chordata</taxon>
        <taxon>Craniata</taxon>
        <taxon>Vertebrata</taxon>
        <taxon>Euteleostomi</taxon>
        <taxon>Mammalia</taxon>
        <taxon>Eutheria</taxon>
        <taxon>Euarchontoglires</taxon>
        <taxon>Primates</taxon>
        <taxon>Haplorrhini</taxon>
        <taxon>Catarrhini</taxon>
        <taxon>Hominidae</taxon>
        <taxon>Homo</taxon>
    </lineage>
</organism>
<feature type="chain" id="PRO_0000153578" description="Immunoglobulin heavy constant gamma 1">
    <location>
        <begin position="1" status="less than"/>
        <end position="399"/>
    </location>
</feature>
<feature type="topological domain" description="Extracellular" evidence="20">
    <location>
        <begin position="1"/>
        <end position="350"/>
    </location>
</feature>
<feature type="transmembrane region" description="Helical" evidence="1">
    <location>
        <begin position="351"/>
        <end position="371"/>
    </location>
</feature>
<feature type="topological domain" description="Cytoplasmic" evidence="20">
    <location>
        <begin position="372"/>
        <end position="399"/>
    </location>
</feature>
<feature type="domain" description="Ig-like 1" evidence="2">
    <location>
        <begin position="6"/>
        <end position="99"/>
    </location>
</feature>
<feature type="domain" description="Ig-like 2" evidence="2">
    <location>
        <begin position="121"/>
        <end position="220"/>
    </location>
</feature>
<feature type="domain" description="Ig-like 3" evidence="2">
    <location>
        <begin position="229"/>
        <end position="325"/>
    </location>
</feature>
<feature type="region of interest" description="CH1">
    <location>
        <begin position="1"/>
        <end position="98"/>
    </location>
</feature>
<feature type="region of interest" description="Disordered" evidence="3">
    <location>
        <begin position="1"/>
        <end position="21"/>
    </location>
</feature>
<feature type="region of interest" description="Hinge">
    <location>
        <begin position="99"/>
        <end position="110"/>
    </location>
</feature>
<feature type="region of interest" description="CH2">
    <location>
        <begin position="111"/>
        <end position="223"/>
    </location>
</feature>
<feature type="region of interest" description="CH3">
    <location>
        <begin position="224"/>
        <end position="330"/>
    </location>
</feature>
<feature type="glycosylation site" description="N-linked (GlcNAc...) (complex) asparagine" evidence="4 7 8 9 10">
    <location>
        <position position="180"/>
    </location>
</feature>
<feature type="disulfide bond" evidence="2">
    <location>
        <begin position="27"/>
        <end position="83"/>
    </location>
</feature>
<feature type="disulfide bond" description="Interchain (with light chain)">
    <location>
        <position position="103"/>
    </location>
</feature>
<feature type="disulfide bond" description="Interchain (with heavy chain)">
    <location>
        <position position="109"/>
    </location>
</feature>
<feature type="disulfide bond" description="Interchain (with heavy chain)">
    <location>
        <position position="112"/>
    </location>
</feature>
<feature type="disulfide bond" evidence="2">
    <location>
        <begin position="144"/>
        <end position="204"/>
    </location>
</feature>
<feature type="disulfide bond" evidence="2">
    <location>
        <begin position="250"/>
        <end position="308"/>
    </location>
</feature>
<feature type="splice variant" id="VSP_061818" description="In isoform 1.">
    <original>EL</original>
    <variation>GK</variation>
    <location>
        <begin position="329"/>
        <end position="330"/>
    </location>
</feature>
<feature type="splice variant" id="VSP_061819" description="In isoform 1.">
    <location>
        <begin position="331"/>
        <end position="399"/>
    </location>
</feature>
<feature type="sequence variant" id="VAR_003886" description="In IMGT allele IGHG1*03.">
    <original>K</original>
    <variation>R</variation>
    <location>
        <position position="97"/>
    </location>
</feature>
<feature type="sequence variant" id="VAR_003887" description="In IMGT allele IGHG1*03.">
    <original>D</original>
    <variation>E</variation>
    <location>
        <position position="239"/>
    </location>
</feature>
<feature type="sequence variant" id="VAR_003888" description="In IMGT allele IGHG1*03.">
    <original>L</original>
    <variation>M</variation>
    <location>
        <position position="241"/>
    </location>
</feature>
<feature type="mutagenesis site" description="Abolishes binding to FCGR1A, FCGR2A and FCGR3A. Impairs ADCC of virus-infected cells by monocytes." evidence="5">
    <original>LL</original>
    <variation>AA</variation>
    <location>
        <begin position="117"/>
        <end position="118"/>
    </location>
</feature>
<feature type="mutagenesis site" description="Reduces the affinity for FCGR1A about 5-fold. Abolishes binding to FCGR2A and FCGR3A. Impairs ADCC of virus-infected cells by monocytes. Impairs binding to complement component C1q. Impairs complement-dependent cytotoxicity." evidence="5">
    <original>L</original>
    <variation>A</variation>
    <location>
        <position position="117"/>
    </location>
</feature>
<feature type="mutagenesis site" description="Reduces the affinity for FCGR1A about 40-fold. Abolishes binding to FCGR2A and FCGR3A. Impairs ADCC of virus-infected cells by monocytes. Impairs binding to complement component C1q. Impairs complement-dependent cytotoxicity.">
    <original>L</original>
    <variation>E</variation>
    <location>
        <position position="118"/>
    </location>
</feature>
<feature type="mutagenesis site" description="Reduces the affinity for FCGR1A about 40-fold. Abolishes binding to FCGR2A and FCGR3A. Impairs ADCC of virus-infected cells by monocytes. Decreases binding to complement component C1q. Decreases complement-dependent cytotoxicity." evidence="5">
    <original>G</original>
    <variation>A</variation>
    <location>
        <position position="120"/>
    </location>
</feature>
<feature type="mutagenesis site" description="Does not affect binding to FCGR1A. Only slightly affects binding to FCGR2A and FCGR3A. Impairs binding to complement component C1q. Impairs complement-dependent cytotoxicity." evidence="5">
    <original>K</original>
    <variation>A</variation>
    <location>
        <position position="205"/>
    </location>
</feature>
<feature type="non-terminal residue">
    <location>
        <position position="1"/>
    </location>
</feature>
<feature type="strand" evidence="30">
    <location>
        <begin position="7"/>
        <end position="14"/>
    </location>
</feature>
<feature type="strand" evidence="30">
    <location>
        <begin position="16"/>
        <end position="18"/>
    </location>
</feature>
<feature type="strand" evidence="30">
    <location>
        <begin position="22"/>
        <end position="35"/>
    </location>
</feature>
<feature type="strand" evidence="30">
    <location>
        <begin position="38"/>
        <end position="41"/>
    </location>
</feature>
<feature type="helix" evidence="30">
    <location>
        <begin position="42"/>
        <end position="44"/>
    </location>
</feature>
<feature type="strand" evidence="30">
    <location>
        <begin position="50"/>
        <end position="52"/>
    </location>
</feature>
<feature type="strand" evidence="34">
    <location>
        <begin position="56"/>
        <end position="58"/>
    </location>
</feature>
<feature type="turn" evidence="34">
    <location>
        <begin position="59"/>
        <end position="61"/>
    </location>
</feature>
<feature type="strand" evidence="30">
    <location>
        <begin position="63"/>
        <end position="72"/>
    </location>
</feature>
<feature type="helix" evidence="30">
    <location>
        <begin position="73"/>
        <end position="75"/>
    </location>
</feature>
<feature type="turn" evidence="30">
    <location>
        <begin position="76"/>
        <end position="78"/>
    </location>
</feature>
<feature type="strand" evidence="30">
    <location>
        <begin position="82"/>
        <end position="87"/>
    </location>
</feature>
<feature type="helix" evidence="30">
    <location>
        <begin position="88"/>
        <end position="90"/>
    </location>
</feature>
<feature type="strand" evidence="30">
    <location>
        <begin position="92"/>
        <end position="97"/>
    </location>
</feature>
<feature type="helix" evidence="28">
    <location>
        <begin position="115"/>
        <end position="117"/>
    </location>
</feature>
<feature type="strand" evidence="26">
    <location>
        <begin position="118"/>
        <end position="120"/>
    </location>
</feature>
<feature type="strand" evidence="27">
    <location>
        <begin position="122"/>
        <end position="126"/>
    </location>
</feature>
<feature type="helix" evidence="27">
    <location>
        <begin position="130"/>
        <end position="134"/>
    </location>
</feature>
<feature type="strand" evidence="35">
    <location>
        <begin position="136"/>
        <end position="138"/>
    </location>
</feature>
<feature type="strand" evidence="27">
    <location>
        <begin position="141"/>
        <end position="149"/>
    </location>
</feature>
<feature type="strand" evidence="27">
    <location>
        <begin position="151"/>
        <end position="153"/>
    </location>
</feature>
<feature type="strand" evidence="27">
    <location>
        <begin position="157"/>
        <end position="162"/>
    </location>
</feature>
<feature type="strand" evidence="27">
    <location>
        <begin position="165"/>
        <end position="167"/>
    </location>
</feature>
<feature type="strand" evidence="36">
    <location>
        <begin position="171"/>
        <end position="173"/>
    </location>
</feature>
<feature type="strand" evidence="31">
    <location>
        <begin position="176"/>
        <end position="178"/>
    </location>
</feature>
<feature type="strand" evidence="32">
    <location>
        <begin position="179"/>
        <end position="181"/>
    </location>
</feature>
<feature type="strand" evidence="27">
    <location>
        <begin position="183"/>
        <end position="190"/>
    </location>
</feature>
<feature type="helix" evidence="27">
    <location>
        <begin position="193"/>
        <end position="197"/>
    </location>
</feature>
<feature type="strand" evidence="27">
    <location>
        <begin position="202"/>
        <end position="207"/>
    </location>
</feature>
<feature type="strand" evidence="27">
    <location>
        <begin position="211"/>
        <end position="213"/>
    </location>
</feature>
<feature type="strand" evidence="27">
    <location>
        <begin position="215"/>
        <end position="219"/>
    </location>
</feature>
<feature type="strand" evidence="33">
    <location>
        <begin position="230"/>
        <end position="234"/>
    </location>
</feature>
<feature type="helix" evidence="33">
    <location>
        <begin position="240"/>
        <end position="242"/>
    </location>
</feature>
<feature type="strand" evidence="33">
    <location>
        <begin position="243"/>
        <end position="258"/>
    </location>
</feature>
<feature type="strand" evidence="33">
    <location>
        <begin position="261"/>
        <end position="266"/>
    </location>
</feature>
<feature type="strand" evidence="27">
    <location>
        <begin position="269"/>
        <end position="271"/>
    </location>
</feature>
<feature type="strand" evidence="33">
    <location>
        <begin position="272"/>
        <end position="276"/>
    </location>
</feature>
<feature type="strand" evidence="29">
    <location>
        <begin position="283"/>
        <end position="285"/>
    </location>
</feature>
<feature type="strand" evidence="33">
    <location>
        <begin position="287"/>
        <end position="296"/>
    </location>
</feature>
<feature type="helix" evidence="33">
    <location>
        <begin position="297"/>
        <end position="301"/>
    </location>
</feature>
<feature type="strand" evidence="33">
    <location>
        <begin position="306"/>
        <end position="311"/>
    </location>
</feature>
<feature type="strand" evidence="25">
    <location>
        <begin position="313"/>
        <end position="315"/>
    </location>
</feature>
<feature type="strand" evidence="33">
    <location>
        <begin position="318"/>
        <end position="324"/>
    </location>
</feature>
<feature type="strand" evidence="37">
    <location>
        <begin position="343"/>
        <end position="346"/>
    </location>
</feature>
<feature type="helix" evidence="37">
    <location>
        <begin position="349"/>
        <end position="370"/>
    </location>
</feature>
<comment type="function">
    <text evidence="5 14 15 17">Constant region of immunoglobulin heavy chains. Immunoglobulins, also known as antibodies, are membrane-bound or secreted glycoproteins produced by B lymphocytes. In the recognition phase of humoral immunity, the membrane-bound immunoglobulins serve as receptors which, upon binding of a specific antigen, trigger the clonal expansion and differentiation of B lymphocytes into immunoglobulins-secreting plasma cells. Secreted immunoglobulins mediate the effector phase of humoral immunity, which results in the elimination of bound antigens (PubMed:20176268, PubMed:22158414). The antigen binding site is formed by the variable domain of one heavy chain, together with that of its associated light chain. Thus, each immunoglobulin has two antigen binding sites with remarkable affinity for a particular antigen. The variable domains are assembled by a process called V-(D)-J rearrangement and can then be subjected to somatic hypermutations which, after exposure to antigen and selection, allow affinity maturation for a particular antigen (PubMed:17576170, PubMed:20176268). Mediates IgG effector functions on monocytes triggering ADCC of virus-infected cells.</text>
</comment>
<comment type="subunit">
    <text evidence="5 15">Immunoglobulins are composed of two identical heavy chains and two identical light chains; disulfide-linked (PubMed:20176268). Interacts with FCGR1A; this interaction mediates IgG effector functions on monocytes. Interacts with FCGR2A and FCGR3A (PubMed:11711607).</text>
</comment>
<comment type="interaction">
    <interactant intactId="EBI-356114">
        <id>P01857</id>
    </interactant>
    <interactant intactId="EBI-724784">
        <id>P31994</id>
        <label>FCGR2B</label>
    </interactant>
    <organismsDiffer>false</organismsDiffer>
    <experiments>31</experiments>
</comment>
<comment type="interaction">
    <interactant intactId="EBI-42826219">
        <id>P01857-1</id>
    </interactant>
    <interactant intactId="EBI-2869867">
        <id>P12314</id>
        <label>FCGR1A</label>
    </interactant>
    <organismsDiffer>false</organismsDiffer>
    <experiments>2</experiments>
</comment>
<comment type="interaction">
    <interactant intactId="EBI-42826219">
        <id>P01857-1</id>
    </interactant>
    <interactant intactId="EBI-15581257">
        <id>P04488</id>
        <label>gE</label>
    </interactant>
    <organismsDiffer>true</organismsDiffer>
    <experiments>2</experiments>
</comment>
<comment type="subcellular location">
    <molecule>Isoform 1</molecule>
    <subcellularLocation>
        <location evidence="15 17">Secreted</location>
    </subcellularLocation>
</comment>
<comment type="subcellular location">
    <molecule>Isoform 2</molecule>
    <subcellularLocation>
        <location evidence="15 17">Cell membrane</location>
        <topology evidence="1">Single-pass membrane protein</topology>
    </subcellularLocation>
</comment>
<comment type="alternative products">
    <event type="alternative splicing"/>
    <isoform>
        <id>P01857-2</id>
        <name>2</name>
        <name>Membrane-bound</name>
        <name evidence="16">mIgG1</name>
        <sequence type="displayed"/>
    </isoform>
    <isoform>
        <id>P01857-1</id>
        <name>1</name>
        <name>Secreted</name>
        <name evidence="18">sIgG1</name>
        <sequence type="described" ref="VSP_061818 VSP_061819"/>
    </isoform>
</comment>
<comment type="PTM">
    <text evidence="10">Glycosylation on Asn-180 is required for interaction with Fc receptors and ability to activate the complement pathway.</text>
</comment>
<comment type="PTM">
    <text evidence="4 10 11">(Microbial infection) Deglycosylation on Asn-180 by S.pyogenes EndoS or Endos2 endoglucosidases prevents interaction between immunoglobulin-gamma (IgG) and Fc receptors, impairing ability to activate the complement pathway.</text>
</comment>
<comment type="polymorphism">
    <text evidence="20">There are several alleles. The sequence shown is that of IMGT allele IGHG1*05.</text>
</comment>
<comment type="disease" evidence="6 12">
    <disease id="DI-02700">
        <name>Multiple myeloma</name>
        <acronym>MM</acronym>
        <description>A malignant tumor of plasma cells usually arising in the bone marrow and characterized by diffuse involvement of the skeletal system, hyperglobulinemia, Bence-Jones proteinuria and anemia. Complications of multiple myeloma are bone pain, hypercalcemia, renal failure and spinal cord compression. The aberrant antibodies that are produced lead to impaired humoral immunity and patients have a high prevalence of infection. Amyloidosis may develop in some patients. Multiple myeloma is part of a spectrum of diseases ranging from monoclonal gammopathy of unknown significance (MGUS) to plasma cell leukemia.</description>
        <dbReference type="MIM" id="254500"/>
    </disease>
    <text>The disease is caused by variants affecting the gene represented in this entry. A chromosomal aberration involving IGHG1 is found in multiple myeloma. Translocation t(11;14)(q13;q32) with the IgH locus. Translocation t(11;14)(q13;q32) with CCND1; translocation t(4;14)(p16.3;q32.3) with FGFR3; translocation t(6;14)(p25;q32) with IRF4.</text>
</comment>
<comment type="caution">
    <text evidence="20">For an example of a full-length immunoglobulin gamma heavy chain see AC P0DOX5.</text>
</comment>
<comment type="sequence caution" evidence="20">
    <conflict type="erroneous initiation">
        <sequence resource="EMBL-CDS" id="AAC82527"/>
    </conflict>
    <text>Extended N-terminus.</text>
</comment>
<accession>P01857</accession>
<accession>A0A0A0MS08</accession>
<sequence>ASTKGPSVFPLAPSSKSTSGGTAALGCLVKDYFPEPVTVSWNSGALTSGVHTFPAVLQSSGLYSLSSVVTVPSSSLGTQTYICNVNHKPSNTKVDKKVEPKSCDKTHTCPPCPAPELLGGPSVFLFPPKPKDTLMISRTPEVTCVVVDVSHEDPEVKFNWYVDGVEVHNAKTKPREEQYNSTYRVVSVLTVLHQDWLNGKEYKCKVSNKALPAPIEKTISKAKGQPREPQVYTLPPSRDELTKNQVSLTCLVKGFYPSDIAVEWESNGQPENNYKTTPPVLDSDGSFFLYSKLTVDKSRWQQGNVFSCSVMHEALHNHYTQKSLSLSPELQLEESCAEAQDGELDGLWTTITIFITLFLLSVCYSATVTFFKVKWIFSSVVDLKQTIIPDYRNMIGQGA</sequence>
<dbReference type="EMBL" id="J00228">
    <property type="protein sequence ID" value="AAC82527.1"/>
    <property type="status" value="ALT_INIT"/>
    <property type="molecule type" value="Genomic_DNA"/>
</dbReference>
<dbReference type="EMBL" id="AL122127">
    <property type="status" value="NOT_ANNOTATED_CDS"/>
    <property type="molecule type" value="Genomic_DNA"/>
</dbReference>
<dbReference type="EMBL" id="X52847">
    <property type="status" value="NOT_ANNOTATED_CDS"/>
    <property type="molecule type" value="mRNA"/>
</dbReference>
<dbReference type="PIR" id="A93433">
    <property type="entry name" value="GHHU"/>
</dbReference>
<dbReference type="PDB" id="1AJ7">
    <property type="method" value="X-ray"/>
    <property type="resolution" value="2.10 A"/>
    <property type="chains" value="H=1-103"/>
</dbReference>
<dbReference type="PDB" id="1AQK">
    <property type="method" value="X-ray"/>
    <property type="resolution" value="1.84 A"/>
    <property type="chains" value="H=1-103"/>
</dbReference>
<dbReference type="PDB" id="1AXS">
    <property type="method" value="X-ray"/>
    <property type="resolution" value="2.60 A"/>
    <property type="chains" value="B/H=1-101"/>
</dbReference>
<dbReference type="PDB" id="1BEY">
    <property type="method" value="X-ray"/>
    <property type="resolution" value="3.25 A"/>
    <property type="chains" value="H=1-98"/>
</dbReference>
<dbReference type="PDB" id="1D5B">
    <property type="method" value="X-ray"/>
    <property type="resolution" value="2.80 A"/>
    <property type="chains" value="B/H=1-101"/>
</dbReference>
<dbReference type="PDB" id="1D5I">
    <property type="method" value="X-ray"/>
    <property type="resolution" value="2.00 A"/>
    <property type="chains" value="H=1-101"/>
</dbReference>
<dbReference type="PDB" id="1D6V">
    <property type="method" value="X-ray"/>
    <property type="resolution" value="2.00 A"/>
    <property type="chains" value="H=1-101"/>
</dbReference>
<dbReference type="PDB" id="1DFB">
    <property type="method" value="X-ray"/>
    <property type="resolution" value="2.70 A"/>
    <property type="chains" value="H=1-103"/>
</dbReference>
<dbReference type="PDB" id="1DN2">
    <property type="method" value="X-ray"/>
    <property type="resolution" value="2.70 A"/>
    <property type="chains" value="A/B=120-326"/>
</dbReference>
<dbReference type="PDB" id="1E4K">
    <property type="method" value="X-ray"/>
    <property type="resolution" value="3.20 A"/>
    <property type="chains" value="A/B=106-330"/>
</dbReference>
<dbReference type="PDB" id="1FC1">
    <property type="method" value="X-ray"/>
    <property type="resolution" value="2.90 A"/>
    <property type="chains" value="A/B=106-329"/>
</dbReference>
<dbReference type="PDB" id="1FC2">
    <property type="method" value="X-ray"/>
    <property type="resolution" value="2.80 A"/>
    <property type="chains" value="D=106-329"/>
</dbReference>
<dbReference type="PDB" id="1FCC">
    <property type="method" value="X-ray"/>
    <property type="resolution" value="3.20 A"/>
    <property type="chains" value="A/B=121-326"/>
</dbReference>
<dbReference type="PDB" id="1GAF">
    <property type="method" value="X-ray"/>
    <property type="resolution" value="1.95 A"/>
    <property type="chains" value="H=1-103"/>
</dbReference>
<dbReference type="PDB" id="1H3T">
    <property type="method" value="X-ray"/>
    <property type="resolution" value="2.40 A"/>
    <property type="chains" value="A/B=108-330"/>
</dbReference>
<dbReference type="PDB" id="1H3U">
    <property type="method" value="X-ray"/>
    <property type="resolution" value="2.40 A"/>
    <property type="chains" value="A/B=108-330"/>
</dbReference>
<dbReference type="PDB" id="1H3V">
    <property type="method" value="X-ray"/>
    <property type="resolution" value="3.10 A"/>
    <property type="chains" value="A/B=108-330"/>
</dbReference>
<dbReference type="PDB" id="1H3W">
    <property type="method" value="X-ray"/>
    <property type="resolution" value="2.85 A"/>
    <property type="chains" value="M=108-330"/>
</dbReference>
<dbReference type="PDB" id="1H3X">
    <property type="method" value="X-ray"/>
    <property type="resolution" value="2.44 A"/>
    <property type="chains" value="A/B=108-330"/>
</dbReference>
<dbReference type="PDB" id="1H3Y">
    <property type="method" value="X-ray"/>
    <property type="resolution" value="4.10 A"/>
    <property type="chains" value="A/B=108-330"/>
</dbReference>
<dbReference type="PDB" id="1HKL">
    <property type="method" value="X-ray"/>
    <property type="resolution" value="2.68 A"/>
    <property type="chains" value="H=1-103"/>
</dbReference>
<dbReference type="PDB" id="1HZH">
    <property type="method" value="X-ray"/>
    <property type="resolution" value="2.70 A"/>
    <property type="chains" value="H/K=1-330"/>
</dbReference>
<dbReference type="PDB" id="1I7Z">
    <property type="method" value="X-ray"/>
    <property type="resolution" value="2.30 A"/>
    <property type="chains" value="B/D=1-103"/>
</dbReference>
<dbReference type="PDB" id="1L6X">
    <property type="method" value="X-ray"/>
    <property type="resolution" value="1.65 A"/>
    <property type="chains" value="A=120-326"/>
</dbReference>
<dbReference type="PDB" id="1N7M">
    <property type="method" value="X-ray"/>
    <property type="resolution" value="1.80 A"/>
    <property type="chains" value="L=2-102"/>
</dbReference>
<dbReference type="PDB" id="1OQO">
    <property type="method" value="X-ray"/>
    <property type="resolution" value="2.30 A"/>
    <property type="chains" value="A/B=119-330"/>
</dbReference>
<dbReference type="PDB" id="1OQX">
    <property type="method" value="X-ray"/>
    <property type="resolution" value="2.60 A"/>
    <property type="chains" value="A/B=119-330"/>
</dbReference>
<dbReference type="PDB" id="1PG7">
    <property type="method" value="X-ray"/>
    <property type="resolution" value="2.50 A"/>
    <property type="chains" value="H/I=1-100"/>
</dbReference>
<dbReference type="PDB" id="1T83">
    <property type="method" value="X-ray"/>
    <property type="resolution" value="3.00 A"/>
    <property type="chains" value="A/B=107-330"/>
</dbReference>
<dbReference type="PDB" id="1T89">
    <property type="method" value="X-ray"/>
    <property type="resolution" value="3.50 A"/>
    <property type="chains" value="A/B=107-330"/>
</dbReference>
<dbReference type="PDB" id="1VGE">
    <property type="method" value="X-ray"/>
    <property type="resolution" value="2.00 A"/>
    <property type="chains" value="H=1-103"/>
</dbReference>
<dbReference type="PDB" id="2DTS">
    <property type="method" value="X-ray"/>
    <property type="resolution" value="2.20 A"/>
    <property type="chains" value="A/B=108-330"/>
</dbReference>
<dbReference type="PDB" id="2GJ7">
    <property type="method" value="X-ray"/>
    <property type="resolution" value="5.00 A"/>
    <property type="chains" value="A/B=106-330"/>
</dbReference>
<dbReference type="PDB" id="2I5Y">
    <property type="method" value="X-ray"/>
    <property type="resolution" value="2.20 A"/>
    <property type="chains" value="H=1-101"/>
</dbReference>
<dbReference type="PDB" id="2IWG">
    <property type="method" value="X-ray"/>
    <property type="resolution" value="2.35 A"/>
    <property type="chains" value="A/D=120-326"/>
</dbReference>
<dbReference type="PDB" id="2J6E">
    <property type="method" value="X-ray"/>
    <property type="resolution" value="3.00 A"/>
    <property type="chains" value="A/B=99-330"/>
</dbReference>
<dbReference type="PDB" id="2JB5">
    <property type="method" value="X-ray"/>
    <property type="resolution" value="2.80 A"/>
    <property type="chains" value="H=1-102"/>
</dbReference>
<dbReference type="PDB" id="2JB6">
    <property type="method" value="X-ray"/>
    <property type="resolution" value="2.85 A"/>
    <property type="chains" value="B/H=1-102"/>
</dbReference>
<dbReference type="PDB" id="2O5X">
    <property type="method" value="X-ray"/>
    <property type="resolution" value="2.05 A"/>
    <property type="chains" value="H=1-108"/>
</dbReference>
<dbReference type="PDB" id="2O5Y">
    <property type="method" value="X-ray"/>
    <property type="resolution" value="2.85 A"/>
    <property type="chains" value="H=1-108"/>
</dbReference>
<dbReference type="PDB" id="2O5Z">
    <property type="method" value="X-ray"/>
    <property type="resolution" value="2.40 A"/>
    <property type="chains" value="H=1-108"/>
</dbReference>
<dbReference type="PDB" id="2OSL">
    <property type="method" value="X-ray"/>
    <property type="resolution" value="2.60 A"/>
    <property type="chains" value="A/H=1-103"/>
</dbReference>
<dbReference type="PDB" id="2QAD">
    <property type="method" value="X-ray"/>
    <property type="resolution" value="3.30 A"/>
    <property type="chains" value="D/H=1-101"/>
</dbReference>
<dbReference type="PDB" id="2QL1">
    <property type="method" value="X-ray"/>
    <property type="resolution" value="2.53 A"/>
    <property type="chains" value="A=106-330"/>
</dbReference>
<dbReference type="PDB" id="2QQK">
    <property type="method" value="X-ray"/>
    <property type="resolution" value="2.75 A"/>
    <property type="chains" value="H=1-107"/>
</dbReference>
<dbReference type="PDB" id="2QQL">
    <property type="method" value="X-ray"/>
    <property type="resolution" value="3.10 A"/>
    <property type="chains" value="H=1-107"/>
</dbReference>
<dbReference type="PDB" id="2QQN">
    <property type="method" value="X-ray"/>
    <property type="resolution" value="2.20 A"/>
    <property type="chains" value="H=1-107"/>
</dbReference>
<dbReference type="PDB" id="2QR0">
    <property type="method" value="X-ray"/>
    <property type="resolution" value="3.50 A"/>
    <property type="chains" value="B/F/H/L/N/R/T/X=1-103"/>
</dbReference>
<dbReference type="PDB" id="2R56">
    <property type="method" value="X-ray"/>
    <property type="resolution" value="2.80 A"/>
    <property type="chains" value="H/I=1-100"/>
</dbReference>
<dbReference type="PDB" id="2RCS">
    <property type="method" value="X-ray"/>
    <property type="resolution" value="2.10 A"/>
    <property type="chains" value="H=1-103"/>
</dbReference>
<dbReference type="PDB" id="2VXQ">
    <property type="method" value="X-ray"/>
    <property type="resolution" value="1.90 A"/>
    <property type="chains" value="H=1-100"/>
</dbReference>
<dbReference type="PDB" id="2WAH">
    <property type="method" value="X-ray"/>
    <property type="resolution" value="2.51 A"/>
    <property type="chains" value="A/B=120-328"/>
</dbReference>
<dbReference type="PDB" id="3AGV">
    <property type="method" value="X-ray"/>
    <property type="resolution" value="2.15 A"/>
    <property type="chains" value="A/B=120-330"/>
</dbReference>
<dbReference type="PDB" id="3AVE">
    <property type="method" value="X-ray"/>
    <property type="resolution" value="2.00 A"/>
    <property type="chains" value="A/B=108-330"/>
</dbReference>
<dbReference type="PDB" id="3AY4">
    <property type="method" value="X-ray"/>
    <property type="resolution" value="2.20 A"/>
    <property type="chains" value="A/B=108-330"/>
</dbReference>
<dbReference type="PDB" id="3B2U">
    <property type="method" value="X-ray"/>
    <property type="resolution" value="2.58 A"/>
    <property type="chains" value="C/F/H/J/N/Q/T/W=1-102"/>
</dbReference>
<dbReference type="PDB" id="3B2V">
    <property type="method" value="X-ray"/>
    <property type="resolution" value="3.30 A"/>
    <property type="chains" value="H=1-102"/>
</dbReference>
<dbReference type="PDB" id="3BDY">
    <property type="method" value="X-ray"/>
    <property type="resolution" value="2.60 A"/>
    <property type="chains" value="H=1-107"/>
</dbReference>
<dbReference type="PDB" id="3BE1">
    <property type="method" value="X-ray"/>
    <property type="resolution" value="2.90 A"/>
    <property type="chains" value="H=1-107"/>
</dbReference>
<dbReference type="PDB" id="3BKY">
    <property type="method" value="X-ray"/>
    <property type="resolution" value="2.61 A"/>
    <property type="chains" value="H=1-104"/>
</dbReference>
<dbReference type="PDB" id="3BN9">
    <property type="method" value="X-ray"/>
    <property type="resolution" value="2.17 A"/>
    <property type="chains" value="D/F=1-107"/>
</dbReference>
<dbReference type="PDB" id="3BQU">
    <property type="method" value="X-ray"/>
    <property type="resolution" value="3.00 A"/>
    <property type="chains" value="B=2-103"/>
</dbReference>
<dbReference type="PDB" id="3C08">
    <property type="method" value="X-ray"/>
    <property type="resolution" value="2.15 A"/>
    <property type="chains" value="H=1-102"/>
</dbReference>
<dbReference type="PDB" id="3C09">
    <property type="method" value="X-ray"/>
    <property type="resolution" value="3.20 A"/>
    <property type="chains" value="C/H=1-102"/>
</dbReference>
<dbReference type="PDB" id="3C2S">
    <property type="method" value="X-ray"/>
    <property type="resolution" value="2.30 A"/>
    <property type="chains" value="A=106-330"/>
</dbReference>
<dbReference type="PDB" id="3CFJ">
    <property type="method" value="X-ray"/>
    <property type="resolution" value="2.60 A"/>
    <property type="chains" value="B/D/F/H=1-104"/>
</dbReference>
<dbReference type="PDB" id="3CFK">
    <property type="method" value="X-ray"/>
    <property type="resolution" value="2.60 A"/>
    <property type="chains" value="B/D/F/H/I/K/N/P=1-104"/>
</dbReference>
<dbReference type="PDB" id="3CSY">
    <property type="method" value="X-ray"/>
    <property type="resolution" value="3.40 A"/>
    <property type="chains" value="A/C/E/G=1-101"/>
</dbReference>
<dbReference type="PDB" id="3D0L">
    <property type="method" value="X-ray"/>
    <property type="resolution" value="2.35 A"/>
    <property type="chains" value="B=2-105"/>
</dbReference>
<dbReference type="PDB" id="3D0V">
    <property type="method" value="X-ray"/>
    <property type="resolution" value="2.05 A"/>
    <property type="chains" value="B=2-105"/>
</dbReference>
<dbReference type="PDB" id="3D6G">
    <property type="method" value="X-ray"/>
    <property type="resolution" value="2.30 A"/>
    <property type="chains" value="A/B=119-328"/>
</dbReference>
<dbReference type="PDB" id="3D85">
    <property type="method" value="X-ray"/>
    <property type="resolution" value="1.90 A"/>
    <property type="chains" value="B=1-108"/>
</dbReference>
<dbReference type="PDB" id="3DJ9">
    <property type="method" value="X-ray"/>
    <property type="resolution" value="1.75 A"/>
    <property type="chains" value="A=119-225"/>
</dbReference>
<dbReference type="PDB" id="3DNK">
    <property type="method" value="X-ray"/>
    <property type="resolution" value="2.84 A"/>
    <property type="chains" value="A/B=119-330"/>
</dbReference>
<dbReference type="PDB" id="3DO3">
    <property type="method" value="X-ray"/>
    <property type="resolution" value="2.50 A"/>
    <property type="chains" value="A/B=119-330"/>
</dbReference>
<dbReference type="PDB" id="3DRO">
    <property type="method" value="X-ray"/>
    <property type="resolution" value="3.90 A"/>
    <property type="chains" value="B=2-103"/>
</dbReference>
<dbReference type="PDB" id="3DRQ">
    <property type="method" value="X-ray"/>
    <property type="resolution" value="2.00 A"/>
    <property type="chains" value="B=2-103"/>
</dbReference>
<dbReference type="PDB" id="3DVG">
    <property type="method" value="X-ray"/>
    <property type="resolution" value="2.60 A"/>
    <property type="chains" value="B=1-107"/>
</dbReference>
<dbReference type="PDB" id="3DVN">
    <property type="method" value="X-ray"/>
    <property type="resolution" value="2.70 A"/>
    <property type="chains" value="B/H=1-107"/>
</dbReference>
<dbReference type="PDB" id="3EYF">
    <property type="method" value="X-ray"/>
    <property type="resolution" value="2.30 A"/>
    <property type="chains" value="B/D=1-108"/>
</dbReference>
<dbReference type="PDB" id="3EYO">
    <property type="method" value="X-ray"/>
    <property type="resolution" value="2.50 A"/>
    <property type="chains" value="B/D=1-108"/>
</dbReference>
<dbReference type="PDB" id="3EYQ">
    <property type="method" value="X-ray"/>
    <property type="resolution" value="2.40 A"/>
    <property type="chains" value="D=1-108"/>
</dbReference>
<dbReference type="PDB" id="3FJT">
    <property type="method" value="X-ray"/>
    <property type="resolution" value="2.50 A"/>
    <property type="chains" value="A/B=119-327"/>
</dbReference>
<dbReference type="PDB" id="3MCL">
    <property type="method" value="X-ray"/>
    <property type="resolution" value="1.70 A"/>
    <property type="chains" value="H=1-107"/>
</dbReference>
<dbReference type="PDB" id="3O11">
    <property type="method" value="X-ray"/>
    <property type="resolution" value="2.80 A"/>
    <property type="chains" value="B/H=1-103"/>
</dbReference>
<dbReference type="PDB" id="3RY6">
    <property type="method" value="X-ray"/>
    <property type="resolution" value="3.80 A"/>
    <property type="chains" value="A/B=114-327"/>
</dbReference>
<dbReference type="PDB" id="3S7G">
    <property type="method" value="X-ray"/>
    <property type="resolution" value="3.13 A"/>
    <property type="chains" value="A/B/C/D=104-330"/>
</dbReference>
<dbReference type="PDB" id="3SGJ">
    <property type="method" value="X-ray"/>
    <property type="resolution" value="2.20 A"/>
    <property type="chains" value="A/B=106-330"/>
</dbReference>
<dbReference type="PDB" id="3SGK">
    <property type="method" value="X-ray"/>
    <property type="resolution" value="2.40 A"/>
    <property type="chains" value="A/B=106-330"/>
</dbReference>
<dbReference type="PDB" id="3TV3">
    <property type="method" value="X-ray"/>
    <property type="resolution" value="1.29 A"/>
    <property type="chains" value="H=1-104"/>
</dbReference>
<dbReference type="PDB" id="3TWC">
    <property type="method" value="X-ray"/>
    <property type="resolution" value="1.65 A"/>
    <property type="chains" value="H=1-104"/>
</dbReference>
<dbReference type="PDB" id="3TYG">
    <property type="method" value="X-ray"/>
    <property type="resolution" value="3.25 A"/>
    <property type="chains" value="H=1-104"/>
</dbReference>
<dbReference type="PDB" id="3U0W">
    <property type="method" value="X-ray"/>
    <property type="resolution" value="2.00 A"/>
    <property type="chains" value="H=1-103"/>
</dbReference>
<dbReference type="PDB" id="3U7W">
    <property type="method" value="X-ray"/>
    <property type="resolution" value="2.60 A"/>
    <property type="chains" value="H=1-104"/>
</dbReference>
<dbReference type="PDB" id="3U7Y">
    <property type="method" value="X-ray"/>
    <property type="resolution" value="2.45 A"/>
    <property type="chains" value="H=1-104"/>
</dbReference>
<dbReference type="PDB" id="3V7M">
    <property type="method" value="X-ray"/>
    <property type="resolution" value="2.02 A"/>
    <property type="chains" value="A=119-327"/>
</dbReference>
<dbReference type="PDB" id="3V8C">
    <property type="method" value="X-ray"/>
    <property type="resolution" value="2.77 A"/>
    <property type="chains" value="A/B=119-330"/>
</dbReference>
<dbReference type="PDB" id="3V95">
    <property type="method" value="X-ray"/>
    <property type="resolution" value="2.70 A"/>
    <property type="chains" value="A/B=119-330"/>
</dbReference>
<dbReference type="PDB" id="3WJJ">
    <property type="method" value="X-ray"/>
    <property type="resolution" value="2.60 A"/>
    <property type="chains" value="A/B=99-328"/>
</dbReference>
<dbReference type="PDB" id="3WJL">
    <property type="method" value="X-ray"/>
    <property type="resolution" value="2.86 A"/>
    <property type="chains" value="A/B=99-328"/>
</dbReference>
<dbReference type="PDB" id="3WKN">
    <property type="method" value="X-ray"/>
    <property type="resolution" value="2.90 A"/>
    <property type="chains" value="A/B/C/D/I/J/M/N=119-330"/>
</dbReference>
<dbReference type="PDB" id="3WN5">
    <property type="method" value="X-ray"/>
    <property type="resolution" value="2.78 A"/>
    <property type="chains" value="A/B/D/E=99-328"/>
</dbReference>
<dbReference type="PDB" id="4ACP">
    <property type="method" value="X-ray"/>
    <property type="resolution" value="2.49 A"/>
    <property type="chains" value="A/B=101-329"/>
</dbReference>
<dbReference type="PDB" id="4B7I">
    <property type="method" value="X-ray"/>
    <property type="resolution" value="2.36 A"/>
    <property type="chains" value="A/B=120-329"/>
</dbReference>
<dbReference type="PDB" id="4BM7">
    <property type="method" value="X-ray"/>
    <property type="resolution" value="1.95 A"/>
    <property type="chains" value="A/B=106-329"/>
</dbReference>
<dbReference type="PDB" id="4BSV">
    <property type="method" value="X-ray"/>
    <property type="resolution" value="1.75 A"/>
    <property type="chains" value="A/B=106-330"/>
</dbReference>
<dbReference type="PDB" id="4BSW">
    <property type="method" value="X-ray"/>
    <property type="resolution" value="2.15 A"/>
    <property type="chains" value="A/B=106-330"/>
</dbReference>
<dbReference type="PDB" id="4BYH">
    <property type="method" value="X-ray"/>
    <property type="resolution" value="2.30 A"/>
    <property type="chains" value="A/B=106-329"/>
</dbReference>
<dbReference type="PDB" id="4CDH">
    <property type="method" value="X-ray"/>
    <property type="resolution" value="2.30 A"/>
    <property type="chains" value="A/B=101-330"/>
</dbReference>
<dbReference type="PDB" id="4D9Q">
    <property type="method" value="X-ray"/>
    <property type="resolution" value="2.28 A"/>
    <property type="chains" value="E/H=2-102"/>
</dbReference>
<dbReference type="PDB" id="4D9R">
    <property type="method" value="X-ray"/>
    <property type="resolution" value="2.42 A"/>
    <property type="chains" value="E/H=2-103"/>
</dbReference>
<dbReference type="PDB" id="4DAG">
    <property type="method" value="X-ray"/>
    <property type="resolution" value="3.39 A"/>
    <property type="chains" value="H=2-98"/>
</dbReference>
<dbReference type="PDB" id="4DZ8">
    <property type="method" value="X-ray"/>
    <property type="resolution" value="1.91 A"/>
    <property type="chains" value="A/B=108-330"/>
</dbReference>
<dbReference type="PDB" id="4EOW">
    <property type="method" value="X-ray"/>
    <property type="resolution" value="1.97 A"/>
    <property type="chains" value="H=1-101"/>
</dbReference>
<dbReference type="PDB" id="4HIX">
    <property type="method" value="X-ray"/>
    <property type="resolution" value="2.20 A"/>
    <property type="chains" value="H=1-107"/>
</dbReference>
<dbReference type="PDB" id="4J12">
    <property type="method" value="X-ray"/>
    <property type="resolution" value="1.90 A"/>
    <property type="chains" value="A=119-327"/>
</dbReference>
<dbReference type="PDB" id="4KU1">
    <property type="method" value="X-ray"/>
    <property type="resolution" value="1.90 A"/>
    <property type="chains" value="A/B=120-327"/>
</dbReference>
<dbReference type="PDB" id="4LLD">
    <property type="method" value="X-ray"/>
    <property type="resolution" value="1.19 A"/>
    <property type="chains" value="A=1-103"/>
</dbReference>
<dbReference type="PDB" id="4LLM">
    <property type="method" value="X-ray"/>
    <property type="resolution" value="1.75 A"/>
    <property type="chains" value="A=1-103"/>
</dbReference>
<dbReference type="PDB" id="4LLQ">
    <property type="method" value="X-ray"/>
    <property type="resolution" value="1.42 A"/>
    <property type="chains" value="A=1-103"/>
</dbReference>
<dbReference type="PDB" id="4N0U">
    <property type="method" value="X-ray"/>
    <property type="resolution" value="3.80 A"/>
    <property type="chains" value="E=119-327"/>
</dbReference>
<dbReference type="PDB" id="4NQS">
    <property type="method" value="X-ray"/>
    <property type="resolution" value="2.64 A"/>
    <property type="chains" value="A/B/G/H=118-330"/>
</dbReference>
<dbReference type="PDB" id="4NQT">
    <property type="method" value="X-ray"/>
    <property type="resolution" value="2.10 A"/>
    <property type="chains" value="A=118-330"/>
</dbReference>
<dbReference type="PDB" id="4NQU">
    <property type="method" value="X-ray"/>
    <property type="resolution" value="2.50 A"/>
    <property type="chains" value="A=118-330"/>
</dbReference>
<dbReference type="PDB" id="4NWT">
    <property type="method" value="X-ray"/>
    <property type="resolution" value="1.75 A"/>
    <property type="chains" value="H=6-95"/>
</dbReference>
<dbReference type="PDB" id="4NWU">
    <property type="method" value="X-ray"/>
    <property type="resolution" value="1.60 A"/>
    <property type="chains" value="H=6-105"/>
</dbReference>
<dbReference type="PDB" id="4O4Y">
    <property type="method" value="X-ray"/>
    <property type="resolution" value="1.85 A"/>
    <property type="chains" value="A=106-119"/>
</dbReference>
<dbReference type="PDB" id="4O51">
    <property type="method" value="X-ray"/>
    <property type="resolution" value="2.20 A"/>
    <property type="chains" value="M/N/O/P=106-119"/>
</dbReference>
<dbReference type="PDB" id="4Q6Y">
    <property type="method" value="X-ray"/>
    <property type="resolution" value="3.00 A"/>
    <property type="chains" value="A/B/C/D=109-329"/>
</dbReference>
<dbReference type="PDB" id="4Q74">
    <property type="method" value="X-ray"/>
    <property type="resolution" value="2.19 A"/>
    <property type="chains" value="A/B=108-329"/>
</dbReference>
<dbReference type="PDB" id="4Q7D">
    <property type="method" value="X-ray"/>
    <property type="resolution" value="2.35 A"/>
    <property type="chains" value="A/B=109-329"/>
</dbReference>
<dbReference type="PDB" id="4W4N">
    <property type="method" value="X-ray"/>
    <property type="resolution" value="1.80 A"/>
    <property type="chains" value="A/B=107-329"/>
</dbReference>
<dbReference type="PDB" id="4W4O">
    <property type="method" value="X-ray"/>
    <property type="resolution" value="1.80 A"/>
    <property type="chains" value="A/B=107-330"/>
</dbReference>
<dbReference type="PDB" id="4WI2">
    <property type="method" value="X-ray"/>
    <property type="resolution" value="1.90 A"/>
    <property type="chains" value="A/B=120-327"/>
</dbReference>
<dbReference type="PDB" id="4WI3">
    <property type="method" value="X-ray"/>
    <property type="resolution" value="2.70 A"/>
    <property type="chains" value="A/B=120-327"/>
</dbReference>
<dbReference type="PDB" id="4WI4">
    <property type="method" value="X-ray"/>
    <property type="resolution" value="2.80 A"/>
    <property type="chains" value="A/B=121-327"/>
</dbReference>
<dbReference type="PDB" id="4WI5">
    <property type="method" value="X-ray"/>
    <property type="resolution" value="2.80 A"/>
    <property type="chains" value="A/B=120-327"/>
</dbReference>
<dbReference type="PDB" id="4WI6">
    <property type="method" value="X-ray"/>
    <property type="resolution" value="2.20 A"/>
    <property type="chains" value="A/B=120-327"/>
</dbReference>
<dbReference type="PDB" id="4WI7">
    <property type="method" value="X-ray"/>
    <property type="resolution" value="1.90 A"/>
    <property type="chains" value="A/B=120-327"/>
</dbReference>
<dbReference type="PDB" id="4WI8">
    <property type="method" value="X-ray"/>
    <property type="resolution" value="2.80 A"/>
    <property type="chains" value="A/B=120-327"/>
</dbReference>
<dbReference type="PDB" id="4WI9">
    <property type="method" value="X-ray"/>
    <property type="resolution" value="2.65 A"/>
    <property type="chains" value="A/B=120-327"/>
</dbReference>
<dbReference type="PDB" id="4X4M">
    <property type="method" value="X-ray"/>
    <property type="resolution" value="3.48 A"/>
    <property type="chains" value="A/B/C/D=112-330"/>
</dbReference>
<dbReference type="PDB" id="4X98">
    <property type="method" value="X-ray"/>
    <property type="resolution" value="2.50 A"/>
    <property type="chains" value="A=108-327, B=121-327"/>
</dbReference>
<dbReference type="PDB" id="4X99">
    <property type="method" value="X-ray"/>
    <property type="resolution" value="2.50 A"/>
    <property type="chains" value="A/B=108-330"/>
</dbReference>
<dbReference type="PDB" id="4XMP">
    <property type="method" value="X-ray"/>
    <property type="resolution" value="1.78 A"/>
    <property type="chains" value="H=1-103"/>
</dbReference>
<dbReference type="PDB" id="4XNY">
    <property type="method" value="X-ray"/>
    <property type="resolution" value="2.30 A"/>
    <property type="chains" value="H=1-103"/>
</dbReference>
<dbReference type="PDB" id="4XNZ">
    <property type="method" value="X-ray"/>
    <property type="resolution" value="3.39 A"/>
    <property type="chains" value="B/E/H=1-103"/>
</dbReference>
<dbReference type="PDB" id="4XXD">
    <property type="method" value="X-ray"/>
    <property type="resolution" value="2.41 A"/>
    <property type="chains" value="B/E=1-107"/>
</dbReference>
<dbReference type="PDB" id="4ZNE">
    <property type="method" value="X-ray"/>
    <property type="resolution" value="2.42 A"/>
    <property type="chains" value="E/J=104-330"/>
</dbReference>
<dbReference type="PDB" id="5BW7">
    <property type="method" value="X-ray"/>
    <property type="resolution" value="3.00 A"/>
    <property type="chains" value="A/B=108-330"/>
</dbReference>
<dbReference type="PDB" id="5C7K">
    <property type="method" value="X-ray"/>
    <property type="resolution" value="4.60 A"/>
    <property type="chains" value="E=1-106"/>
</dbReference>
<dbReference type="PDB" id="5D4Q">
    <property type="method" value="X-ray"/>
    <property type="resolution" value="2.39 A"/>
    <property type="chains" value="A/B=109-329"/>
</dbReference>
<dbReference type="PDB" id="5D6D">
    <property type="method" value="X-ray"/>
    <property type="resolution" value="3.13 A"/>
    <property type="chains" value="A/B=108-329"/>
</dbReference>
<dbReference type="PDB" id="5DI8">
    <property type="method" value="X-ray"/>
    <property type="resolution" value="1.90 A"/>
    <property type="chains" value="A/B=104-330"/>
</dbReference>
<dbReference type="PDB" id="5DJ0">
    <property type="method" value="X-ray"/>
    <property type="resolution" value="2.28 A"/>
    <property type="chains" value="A/B=104-330"/>
</dbReference>
<dbReference type="PDB" id="5DJ2">
    <property type="method" value="X-ray"/>
    <property type="resolution" value="2.56 A"/>
    <property type="chains" value="A/B=104-330"/>
</dbReference>
<dbReference type="PDB" id="5DJ6">
    <property type="method" value="X-ray"/>
    <property type="resolution" value="2.00 A"/>
    <property type="chains" value="A/B=104-330"/>
</dbReference>
<dbReference type="PDB" id="5DJ8">
    <property type="method" value="X-ray"/>
    <property type="resolution" value="2.40 A"/>
    <property type="chains" value="A/B=104-330"/>
</dbReference>
<dbReference type="PDB" id="5DJA">
    <property type="method" value="X-ray"/>
    <property type="resolution" value="2.90 A"/>
    <property type="chains" value="A/B=104-330"/>
</dbReference>
<dbReference type="PDB" id="5DJC">
    <property type="method" value="X-ray"/>
    <property type="resolution" value="2.10 A"/>
    <property type="chains" value="A/B/D/E=104-330"/>
</dbReference>
<dbReference type="PDB" id="5DJD">
    <property type="method" value="X-ray"/>
    <property type="resolution" value="2.30 A"/>
    <property type="chains" value="A/B=104-330"/>
</dbReference>
<dbReference type="PDB" id="5DJX">
    <property type="method" value="X-ray"/>
    <property type="resolution" value="2.25 A"/>
    <property type="chains" value="A/B/D/E=104-330"/>
</dbReference>
<dbReference type="PDB" id="5DJY">
    <property type="method" value="X-ray"/>
    <property type="resolution" value="2.15 A"/>
    <property type="chains" value="A/B=104-330"/>
</dbReference>
<dbReference type="PDB" id="5DJZ">
    <property type="method" value="X-ray"/>
    <property type="resolution" value="1.90 A"/>
    <property type="chains" value="A/B=104-330"/>
</dbReference>
<dbReference type="PDB" id="5DK0">
    <property type="method" value="X-ray"/>
    <property type="resolution" value="2.30 A"/>
    <property type="chains" value="A/B=104-330"/>
</dbReference>
<dbReference type="PDB" id="5DK2">
    <property type="method" value="X-ray"/>
    <property type="resolution" value="2.60 A"/>
    <property type="chains" value="A/B/D/E=104-330"/>
</dbReference>
<dbReference type="PDB" id="5DVK">
    <property type="method" value="X-ray"/>
    <property type="resolution" value="2.60 A"/>
    <property type="chains" value="A=104-330"/>
</dbReference>
<dbReference type="PDB" id="5DVL">
    <property type="method" value="X-ray"/>
    <property type="resolution" value="1.90 A"/>
    <property type="chains" value="A=104-330"/>
</dbReference>
<dbReference type="PDB" id="5DVM">
    <property type="method" value="X-ray"/>
    <property type="resolution" value="2.95 A"/>
    <property type="chains" value="A=104-330"/>
</dbReference>
<dbReference type="PDB" id="5DVN">
    <property type="method" value="X-ray"/>
    <property type="resolution" value="2.50 A"/>
    <property type="chains" value="A=104-330"/>
</dbReference>
<dbReference type="PDB" id="5DVO">
    <property type="method" value="X-ray"/>
    <property type="resolution" value="2.50 A"/>
    <property type="chains" value="A/B=104-330"/>
</dbReference>
<dbReference type="PDB" id="5GSQ">
    <property type="method" value="X-ray"/>
    <property type="resolution" value="1.85 A"/>
    <property type="chains" value="A/B/C/D=106-330"/>
</dbReference>
<dbReference type="PDB" id="5HSF">
    <property type="method" value="X-ray"/>
    <property type="resolution" value="1.52 A"/>
    <property type="chains" value="A/B=221-330"/>
</dbReference>
<dbReference type="PDB" id="5HY9">
    <property type="method" value="X-ray"/>
    <property type="resolution" value="2.70 A"/>
    <property type="chains" value="A/B=104-330"/>
</dbReference>
<dbReference type="PDB" id="5HYE">
    <property type="method" value="X-ray"/>
    <property type="resolution" value="1.89 A"/>
    <property type="chains" value="A/C=104-330"/>
</dbReference>
<dbReference type="PDB" id="5HYF">
    <property type="method" value="X-ray"/>
    <property type="resolution" value="1.80 A"/>
    <property type="chains" value="A=104-330"/>
</dbReference>
<dbReference type="PDB" id="5HYI">
    <property type="method" value="X-ray"/>
    <property type="resolution" value="2.90 A"/>
    <property type="chains" value="A/B/C/D=104-330"/>
</dbReference>
<dbReference type="PDB" id="5IQ7">
    <property type="method" value="X-ray"/>
    <property type="resolution" value="3.29 A"/>
    <property type="chains" value="H=1-102"/>
</dbReference>
<dbReference type="PDB" id="5IQ9">
    <property type="method" value="X-ray"/>
    <property type="resolution" value="2.40 A"/>
    <property type="chains" value="A/H=1-101"/>
</dbReference>
<dbReference type="PDB" id="5IW3">
    <property type="method" value="X-ray"/>
    <property type="resolution" value="2.05 A"/>
    <property type="chains" value="A=119-326"/>
</dbReference>
<dbReference type="PDB" id="5IW6">
    <property type="method" value="X-ray"/>
    <property type="resolution" value="2.34 A"/>
    <property type="chains" value="A=119-327, B=122-326"/>
</dbReference>
<dbReference type="PDB" id="5JIH">
    <property type="method" value="X-ray"/>
    <property type="resolution" value="1.66 A"/>
    <property type="chains" value="A/B=108-329"/>
</dbReference>
<dbReference type="PDB" id="5JII">
    <property type="method" value="X-ray"/>
    <property type="resolution" value="1.79 A"/>
    <property type="chains" value="A/B=108-329"/>
</dbReference>
<dbReference type="PDB" id="5JIK">
    <property type="method" value="X-ray"/>
    <property type="resolution" value="1.82 A"/>
    <property type="chains" value="A/B=108-329"/>
</dbReference>
<dbReference type="PDB" id="5K33">
    <property type="method" value="X-ray"/>
    <property type="resolution" value="3.30 A"/>
    <property type="chains" value="A=108-329"/>
</dbReference>
<dbReference type="PDB" id="5K64">
    <property type="method" value="X-ray"/>
    <property type="resolution" value="2.44 A"/>
    <property type="chains" value="A/B=108-330"/>
</dbReference>
<dbReference type="PDB" id="5K65">
    <property type="method" value="X-ray"/>
    <property type="resolution" value="2.50 A"/>
    <property type="chains" value="A/B=108-330"/>
</dbReference>
<dbReference type="PDB" id="5K8D">
    <property type="method" value="X-ray"/>
    <property type="resolution" value="4.19 A"/>
    <property type="chains" value="B=104-329"/>
</dbReference>
<dbReference type="PDB" id="5KWG">
    <property type="method" value="X-ray"/>
    <property type="resolution" value="4.30 A"/>
    <property type="chains" value="A=108-330"/>
</dbReference>
<dbReference type="PDB" id="5M3V">
    <property type="method" value="X-ray"/>
    <property type="resolution" value="1.97 A"/>
    <property type="chains" value="A/B=104-330"/>
</dbReference>
<dbReference type="PDB" id="5TPS">
    <property type="method" value="X-ray"/>
    <property type="resolution" value="2.70 A"/>
    <property type="chains" value="A/B=104-330"/>
</dbReference>
<dbReference type="PDB" id="5U4Y">
    <property type="method" value="X-ray"/>
    <property type="resolution" value="2.50 A"/>
    <property type="chains" value="A/B=118-329"/>
</dbReference>
<dbReference type="PDB" id="5U52">
    <property type="method" value="X-ray"/>
    <property type="resolution" value="1.94 A"/>
    <property type="chains" value="A/B=119-326"/>
</dbReference>
<dbReference type="PDB" id="5U66">
    <property type="method" value="X-ray"/>
    <property type="resolution" value="1.70 A"/>
    <property type="chains" value="A=120-326"/>
</dbReference>
<dbReference type="PDB" id="5V43">
    <property type="method" value="X-ray"/>
    <property type="resolution" value="2.32 A"/>
    <property type="chains" value="A/B=104-329"/>
</dbReference>
<dbReference type="PDB" id="5V4E">
    <property type="method" value="X-ray"/>
    <property type="resolution" value="3.22 A"/>
    <property type="chains" value="A/B/C/D/E/F/G/H=104-329"/>
</dbReference>
<dbReference type="PDB" id="6DCV">
    <property type="method" value="X-ray"/>
    <property type="resolution" value="1.90 A"/>
    <property type="chains" value="B/H=1-107"/>
</dbReference>
<dbReference type="PDB" id="6DCW">
    <property type="method" value="X-ray"/>
    <property type="resolution" value="2.00 A"/>
    <property type="chains" value="H=1-107"/>
</dbReference>
<dbReference type="PDB" id="6DE7">
    <property type="method" value="X-ray"/>
    <property type="resolution" value="4.12 A"/>
    <property type="chains" value="D=1-105, H=1-103"/>
</dbReference>
<dbReference type="PDB" id="6F2Z">
    <property type="method" value="X-ray"/>
    <property type="resolution" value="2.30 A"/>
    <property type="chains" value="A/B=104-330"/>
</dbReference>
<dbReference type="PDB" id="6G1E">
    <property type="method" value="X-ray"/>
    <property type="resolution" value="1.88 A"/>
    <property type="chains" value="A=104-156"/>
</dbReference>
<dbReference type="PDB" id="6N35">
    <property type="method" value="X-ray"/>
    <property type="resolution" value="1.75 A"/>
    <property type="chains" value="H/M=1-102"/>
</dbReference>
<dbReference type="PDB" id="6YT7">
    <property type="method" value="X-ray"/>
    <property type="resolution" value="1.55 A"/>
    <property type="chains" value="B=104-330"/>
</dbReference>
<dbReference type="PDB" id="7KWO">
    <property type="method" value="EM"/>
    <property type="resolution" value="2.90 A"/>
    <property type="chains" value="V=12-329"/>
</dbReference>
<dbReference type="PDB" id="7LUR">
    <property type="method" value="X-ray"/>
    <property type="resolution" value="1.95 A"/>
    <property type="chains" value="A/B=104-330"/>
</dbReference>
<dbReference type="PDB" id="7Q15">
    <property type="method" value="X-ray"/>
    <property type="resolution" value="3.30 A"/>
    <property type="chains" value="E/F=104-328"/>
</dbReference>
<dbReference type="PDB" id="7Q3P">
    <property type="method" value="X-ray"/>
    <property type="resolution" value="2.10 A"/>
    <property type="chains" value="A/B/C=104-328"/>
</dbReference>
<dbReference type="PDB" id="7WSO">
    <property type="method" value="EM"/>
    <property type="resolution" value="3.03 A"/>
    <property type="chains" value="B/K=120-371"/>
</dbReference>
<dbReference type="PDB" id="8DIN">
    <property type="method" value="X-ray"/>
    <property type="resolution" value="2.50 A"/>
    <property type="chains" value="A/B=112-330"/>
</dbReference>
<dbReference type="PDB" id="8DIR">
    <property type="method" value="X-ray"/>
    <property type="resolution" value="2.30 A"/>
    <property type="chains" value="A/B=112-330"/>
</dbReference>
<dbReference type="PDB" id="8DJ7">
    <property type="method" value="X-ray"/>
    <property type="resolution" value="2.39 A"/>
    <property type="chains" value="A/B=112-330"/>
</dbReference>
<dbReference type="PDB" id="8YP1">
    <property type="method" value="X-ray"/>
    <property type="resolution" value="2.79 A"/>
    <property type="chains" value="A/B/C/D=104-328"/>
</dbReference>
<dbReference type="PDBsum" id="1AJ7"/>
<dbReference type="PDBsum" id="1AQK"/>
<dbReference type="PDBsum" id="1AXS"/>
<dbReference type="PDBsum" id="1BEY"/>
<dbReference type="PDBsum" id="1D5B"/>
<dbReference type="PDBsum" id="1D5I"/>
<dbReference type="PDBsum" id="1D6V"/>
<dbReference type="PDBsum" id="1DFB"/>
<dbReference type="PDBsum" id="1DN2"/>
<dbReference type="PDBsum" id="1E4K"/>
<dbReference type="PDBsum" id="1FC1"/>
<dbReference type="PDBsum" id="1FC2"/>
<dbReference type="PDBsum" id="1FCC"/>
<dbReference type="PDBsum" id="1GAF"/>
<dbReference type="PDBsum" id="1H3T"/>
<dbReference type="PDBsum" id="1H3U"/>
<dbReference type="PDBsum" id="1H3V"/>
<dbReference type="PDBsum" id="1H3W"/>
<dbReference type="PDBsum" id="1H3X"/>
<dbReference type="PDBsum" id="1H3Y"/>
<dbReference type="PDBsum" id="1HKL"/>
<dbReference type="PDBsum" id="1HZH"/>
<dbReference type="PDBsum" id="1I7Z"/>
<dbReference type="PDBsum" id="1L6X"/>
<dbReference type="PDBsum" id="1N7M"/>
<dbReference type="PDBsum" id="1OQO"/>
<dbReference type="PDBsum" id="1OQX"/>
<dbReference type="PDBsum" id="1PG7"/>
<dbReference type="PDBsum" id="1T83"/>
<dbReference type="PDBsum" id="1T89"/>
<dbReference type="PDBsum" id="1VGE"/>
<dbReference type="PDBsum" id="2DTS"/>
<dbReference type="PDBsum" id="2GJ7"/>
<dbReference type="PDBsum" id="2I5Y"/>
<dbReference type="PDBsum" id="2IWG"/>
<dbReference type="PDBsum" id="2J6E"/>
<dbReference type="PDBsum" id="2JB5"/>
<dbReference type="PDBsum" id="2JB6"/>
<dbReference type="PDBsum" id="2O5X"/>
<dbReference type="PDBsum" id="2O5Y"/>
<dbReference type="PDBsum" id="2O5Z"/>
<dbReference type="PDBsum" id="2OSL"/>
<dbReference type="PDBsum" id="2QAD"/>
<dbReference type="PDBsum" id="2QL1"/>
<dbReference type="PDBsum" id="2QQK"/>
<dbReference type="PDBsum" id="2QQL"/>
<dbReference type="PDBsum" id="2QQN"/>
<dbReference type="PDBsum" id="2QR0"/>
<dbReference type="PDBsum" id="2R56"/>
<dbReference type="PDBsum" id="2RCS"/>
<dbReference type="PDBsum" id="2VXQ"/>
<dbReference type="PDBsum" id="2WAH"/>
<dbReference type="PDBsum" id="3AGV"/>
<dbReference type="PDBsum" id="3AVE"/>
<dbReference type="PDBsum" id="3AY4"/>
<dbReference type="PDBsum" id="3B2U"/>
<dbReference type="PDBsum" id="3B2V"/>
<dbReference type="PDBsum" id="3BDY"/>
<dbReference type="PDBsum" id="3BE1"/>
<dbReference type="PDBsum" id="3BKY"/>
<dbReference type="PDBsum" id="3BN9"/>
<dbReference type="PDBsum" id="3BQU"/>
<dbReference type="PDBsum" id="3C08"/>
<dbReference type="PDBsum" id="3C09"/>
<dbReference type="PDBsum" id="3C2S"/>
<dbReference type="PDBsum" id="3CFJ"/>
<dbReference type="PDBsum" id="3CFK"/>
<dbReference type="PDBsum" id="3CSY"/>
<dbReference type="PDBsum" id="3D0L"/>
<dbReference type="PDBsum" id="3D0V"/>
<dbReference type="PDBsum" id="3D6G"/>
<dbReference type="PDBsum" id="3D85"/>
<dbReference type="PDBsum" id="3DJ9"/>
<dbReference type="PDBsum" id="3DNK"/>
<dbReference type="PDBsum" id="3DO3"/>
<dbReference type="PDBsum" id="3DRO"/>
<dbReference type="PDBsum" id="3DRQ"/>
<dbReference type="PDBsum" id="3DVG"/>
<dbReference type="PDBsum" id="3DVN"/>
<dbReference type="PDBsum" id="3EYF"/>
<dbReference type="PDBsum" id="3EYO"/>
<dbReference type="PDBsum" id="3EYQ"/>
<dbReference type="PDBsum" id="3FJT"/>
<dbReference type="PDBsum" id="3MCL"/>
<dbReference type="PDBsum" id="3O11"/>
<dbReference type="PDBsum" id="3RY6"/>
<dbReference type="PDBsum" id="3S7G"/>
<dbReference type="PDBsum" id="3SGJ"/>
<dbReference type="PDBsum" id="3SGK"/>
<dbReference type="PDBsum" id="3TV3"/>
<dbReference type="PDBsum" id="3TWC"/>
<dbReference type="PDBsum" id="3TYG"/>
<dbReference type="PDBsum" id="3U0W"/>
<dbReference type="PDBsum" id="3U7W"/>
<dbReference type="PDBsum" id="3U7Y"/>
<dbReference type="PDBsum" id="3V7M"/>
<dbReference type="PDBsum" id="3V8C"/>
<dbReference type="PDBsum" id="3V95"/>
<dbReference type="PDBsum" id="3WJJ"/>
<dbReference type="PDBsum" id="3WJL"/>
<dbReference type="PDBsum" id="3WKN"/>
<dbReference type="PDBsum" id="3WN5"/>
<dbReference type="PDBsum" id="4ACP"/>
<dbReference type="PDBsum" id="4B7I"/>
<dbReference type="PDBsum" id="4BM7"/>
<dbReference type="PDBsum" id="4BSV"/>
<dbReference type="PDBsum" id="4BSW"/>
<dbReference type="PDBsum" id="4BYH"/>
<dbReference type="PDBsum" id="4CDH"/>
<dbReference type="PDBsum" id="4D9Q"/>
<dbReference type="PDBsum" id="4D9R"/>
<dbReference type="PDBsum" id="4DAG"/>
<dbReference type="PDBsum" id="4DZ8"/>
<dbReference type="PDBsum" id="4EOW"/>
<dbReference type="PDBsum" id="4HIX"/>
<dbReference type="PDBsum" id="4J12"/>
<dbReference type="PDBsum" id="4KU1"/>
<dbReference type="PDBsum" id="4LLD"/>
<dbReference type="PDBsum" id="4LLM"/>
<dbReference type="PDBsum" id="4LLQ"/>
<dbReference type="PDBsum" id="4N0U"/>
<dbReference type="PDBsum" id="4NQS"/>
<dbReference type="PDBsum" id="4NQT"/>
<dbReference type="PDBsum" id="4NQU"/>
<dbReference type="PDBsum" id="4NWT"/>
<dbReference type="PDBsum" id="4NWU"/>
<dbReference type="PDBsum" id="4O4Y"/>
<dbReference type="PDBsum" id="4O51"/>
<dbReference type="PDBsum" id="4Q6Y"/>
<dbReference type="PDBsum" id="4Q74"/>
<dbReference type="PDBsum" id="4Q7D"/>
<dbReference type="PDBsum" id="4W4N"/>
<dbReference type="PDBsum" id="4W4O"/>
<dbReference type="PDBsum" id="4WI2"/>
<dbReference type="PDBsum" id="4WI3"/>
<dbReference type="PDBsum" id="4WI4"/>
<dbReference type="PDBsum" id="4WI5"/>
<dbReference type="PDBsum" id="4WI6"/>
<dbReference type="PDBsum" id="4WI7"/>
<dbReference type="PDBsum" id="4WI8"/>
<dbReference type="PDBsum" id="4WI9"/>
<dbReference type="PDBsum" id="4X4M"/>
<dbReference type="PDBsum" id="4X98"/>
<dbReference type="PDBsum" id="4X99"/>
<dbReference type="PDBsum" id="4XMP"/>
<dbReference type="PDBsum" id="4XNY"/>
<dbReference type="PDBsum" id="4XNZ"/>
<dbReference type="PDBsum" id="4XXD"/>
<dbReference type="PDBsum" id="4ZNE"/>
<dbReference type="PDBsum" id="5BW7"/>
<dbReference type="PDBsum" id="5C7K"/>
<dbReference type="PDBsum" id="5D4Q"/>
<dbReference type="PDBsum" id="5D6D"/>
<dbReference type="PDBsum" id="5DI8"/>
<dbReference type="PDBsum" id="5DJ0"/>
<dbReference type="PDBsum" id="5DJ2"/>
<dbReference type="PDBsum" id="5DJ6"/>
<dbReference type="PDBsum" id="5DJ8"/>
<dbReference type="PDBsum" id="5DJA"/>
<dbReference type="PDBsum" id="5DJC"/>
<dbReference type="PDBsum" id="5DJD"/>
<dbReference type="PDBsum" id="5DJX"/>
<dbReference type="PDBsum" id="5DJY"/>
<dbReference type="PDBsum" id="5DJZ"/>
<dbReference type="PDBsum" id="5DK0"/>
<dbReference type="PDBsum" id="5DK2"/>
<dbReference type="PDBsum" id="5DVK"/>
<dbReference type="PDBsum" id="5DVL"/>
<dbReference type="PDBsum" id="5DVM"/>
<dbReference type="PDBsum" id="5DVN"/>
<dbReference type="PDBsum" id="5DVO"/>
<dbReference type="PDBsum" id="5GSQ"/>
<dbReference type="PDBsum" id="5HSF"/>
<dbReference type="PDBsum" id="5HY9"/>
<dbReference type="PDBsum" id="5HYE"/>
<dbReference type="PDBsum" id="5HYF"/>
<dbReference type="PDBsum" id="5HYI"/>
<dbReference type="PDBsum" id="5IQ7"/>
<dbReference type="PDBsum" id="5IQ9"/>
<dbReference type="PDBsum" id="5IW3"/>
<dbReference type="PDBsum" id="5IW6"/>
<dbReference type="PDBsum" id="5JIH"/>
<dbReference type="PDBsum" id="5JII"/>
<dbReference type="PDBsum" id="5JIK"/>
<dbReference type="PDBsum" id="5K33"/>
<dbReference type="PDBsum" id="5K64"/>
<dbReference type="PDBsum" id="5K65"/>
<dbReference type="PDBsum" id="5K8D"/>
<dbReference type="PDBsum" id="5KWG"/>
<dbReference type="PDBsum" id="5M3V"/>
<dbReference type="PDBsum" id="5TPS"/>
<dbReference type="PDBsum" id="5U4Y"/>
<dbReference type="PDBsum" id="5U52"/>
<dbReference type="PDBsum" id="5U66"/>
<dbReference type="PDBsum" id="5V43"/>
<dbReference type="PDBsum" id="5V4E"/>
<dbReference type="PDBsum" id="6DCV"/>
<dbReference type="PDBsum" id="6DCW"/>
<dbReference type="PDBsum" id="6DE7"/>
<dbReference type="PDBsum" id="6F2Z"/>
<dbReference type="PDBsum" id="6G1E"/>
<dbReference type="PDBsum" id="6N35"/>
<dbReference type="PDBsum" id="6YT7"/>
<dbReference type="PDBsum" id="7KWO"/>
<dbReference type="PDBsum" id="7LUR"/>
<dbReference type="PDBsum" id="7Q15"/>
<dbReference type="PDBsum" id="7Q3P"/>
<dbReference type="PDBsum" id="7WSO"/>
<dbReference type="PDBsum" id="8DIN"/>
<dbReference type="PDBsum" id="8DIR"/>
<dbReference type="PDBsum" id="8DJ7"/>
<dbReference type="PDBsum" id="8YP1"/>
<dbReference type="EMDB" id="EMD-0235"/>
<dbReference type="EMDB" id="EMD-0236"/>
<dbReference type="EMDB" id="EMD-0433"/>
<dbReference type="EMDB" id="EMD-0434"/>
<dbReference type="EMDB" id="EMD-10118"/>
<dbReference type="EMDB" id="EMD-10123"/>
<dbReference type="EMDB" id="EMD-10124"/>
<dbReference type="EMDB" id="EMD-10732"/>
<dbReference type="EMDB" id="EMD-10734"/>
<dbReference type="EMDB" id="EMD-10863"/>
<dbReference type="EMDB" id="EMD-11061"/>
<dbReference type="EMDB" id="EMD-11062"/>
<dbReference type="EMDB" id="EMD-11173"/>
<dbReference type="EMDB" id="EMD-11174"/>
<dbReference type="EMDB" id="EMD-11184"/>
<dbReference type="EMDB" id="EMD-11647"/>
<dbReference type="EMDB" id="EMD-11648"/>
<dbReference type="EMDB" id="EMD-12271"/>
<dbReference type="EMDB" id="EMD-12272"/>
<dbReference type="EMDB" id="EMD-12274"/>
<dbReference type="EMDB" id="EMD-12275"/>
<dbReference type="EMDB" id="EMD-12276"/>
<dbReference type="EMDB" id="EMD-12277"/>
<dbReference type="EMDB" id="EMD-12278"/>
<dbReference type="EMDB" id="EMD-12279"/>
<dbReference type="EMDB" id="EMD-12280"/>
<dbReference type="EMDB" id="EMD-12281"/>
<dbReference type="EMDB" id="EMD-12282"/>
<dbReference type="EMDB" id="EMD-12283"/>
<dbReference type="EMDB" id="EMD-12284"/>
<dbReference type="EMDB" id="EMD-12365"/>
<dbReference type="EMDB" id="EMD-12366"/>
<dbReference type="EMDB" id="EMD-12367"/>
<dbReference type="EMDB" id="EMD-12890"/>
<dbReference type="EMDB" id="EMD-12891"/>
<dbReference type="EMDB" id="EMD-13190"/>
<dbReference type="EMDB" id="EMD-13316"/>
<dbReference type="EMDB" id="EMD-13857"/>
<dbReference type="EMDB" id="EMD-13868"/>
<dbReference type="EMDB" id="EMD-13870"/>
<dbReference type="EMDB" id="EMD-13871"/>
<dbReference type="EMDB" id="EMD-13872"/>
<dbReference type="EMDB" id="EMD-13873"/>
<dbReference type="EMDB" id="EMD-13875"/>
<dbReference type="EMDB" id="EMD-14141"/>
<dbReference type="EMDB" id="EMD-14142"/>
<dbReference type="EMDB" id="EMD-14143"/>
<dbReference type="EMDB" id="EMD-14250"/>
<dbReference type="EMDB" id="EMD-14591"/>
<dbReference type="EMDB" id="EMD-14750"/>
<dbReference type="EMDB" id="EMD-15971"/>
<dbReference type="EMDB" id="EMD-16024"/>
<dbReference type="EMDB" id="EMD-16026"/>
<dbReference type="EMDB" id="EMD-16113"/>
<dbReference type="EMDB" id="EMD-16397"/>
<dbReference type="EMDB" id="EMD-16460"/>
<dbReference type="EMDB" id="EMD-16473"/>
<dbReference type="EMDB" id="EMD-16493"/>
<dbReference type="EMDB" id="EMD-16676"/>
<dbReference type="EMDB" id="EMD-16678"/>
<dbReference type="EMDB" id="EMD-16680"/>
<dbReference type="EMDB" id="EMD-16805"/>
<dbReference type="EMDB" id="EMD-16807"/>
<dbReference type="EMDB" id="EMD-17362"/>
<dbReference type="EMDB" id="EMD-17655"/>
<dbReference type="EMDB" id="EMD-17677"/>
<dbReference type="EMDB" id="EMD-17993"/>
<dbReference type="EMDB" id="EMD-18188"/>
<dbReference type="EMDB" id="EMD-18189"/>
<dbReference type="EMDB" id="EMD-18190"/>
<dbReference type="EMDB" id="EMD-18560"/>
<dbReference type="EMDB" id="EMD-18571"/>
<dbReference type="EMDB" id="EMD-19002"/>
<dbReference type="EMDB" id="EMD-19016"/>
<dbReference type="EMDB" id="EMD-19017"/>
<dbReference type="EMDB" id="EMD-19440"/>
<dbReference type="EMDB" id="EMD-19665"/>
<dbReference type="EMDB" id="EMD-20118"/>
<dbReference type="EMDB" id="EMD-20151"/>
<dbReference type="EMDB" id="EMD-20152"/>
<dbReference type="EMDB" id="EMD-20153"/>
<dbReference type="EMDB" id="EMD-20175"/>
<dbReference type="EMDB" id="EMD-20189"/>
<dbReference type="EMDB" id="EMD-20191"/>
<dbReference type="EMDB" id="EMD-20224"/>
<dbReference type="EMDB" id="EMD-20301"/>
<dbReference type="EMDB" id="EMD-20511"/>
<dbReference type="EMDB" id="EMD-20538"/>
<dbReference type="EMDB" id="EMD-20540"/>
<dbReference type="EMDB" id="EMD-20541"/>
<dbReference type="EMDB" id="EMD-20594"/>
<dbReference type="EMDB" id="EMD-20605"/>
<dbReference type="EMDB" id="EMD-20608"/>
<dbReference type="EMDB" id="EMD-20735"/>
<dbReference type="EMDB" id="EMD-20806"/>
<dbReference type="EMDB" id="EMD-20813"/>
<dbReference type="EMDB" id="EMD-20817"/>
<dbReference type="EMDB" id="EMD-20818"/>
<dbReference type="EMDB" id="EMD-20819"/>
<dbReference type="EMDB" id="EMD-20863"/>
<dbReference type="EMDB" id="EMD-21042"/>
<dbReference type="EMDB" id="EMD-21043"/>
<dbReference type="EMDB" id="EMD-21208"/>
<dbReference type="EMDB" id="EMD-21212"/>
<dbReference type="EMDB" id="EMD-21258"/>
<dbReference type="EMDB" id="EMD-21383"/>
<dbReference type="EMDB" id="EMD-21456"/>
<dbReference type="EMDB" id="EMD-21927"/>
<dbReference type="EMDB" id="EMD-21928"/>
<dbReference type="EMDB" id="EMD-22048"/>
<dbReference type="EMDB" id="EMD-22127"/>
<dbReference type="EMDB" id="EMD-22128"/>
<dbReference type="EMDB" id="EMD-22137"/>
<dbReference type="EMDB" id="EMD-22506"/>
<dbReference type="EMDB" id="EMD-22512"/>
<dbReference type="EMDB" id="EMD-22652"/>
<dbReference type="EMDB" id="EMD-22653"/>
<dbReference type="EMDB" id="EMD-22654"/>
<dbReference type="EMDB" id="EMD-22655"/>
<dbReference type="EMDB" id="EMD-22729"/>
<dbReference type="EMDB" id="EMD-22730"/>
<dbReference type="EMDB" id="EMD-22731"/>
<dbReference type="EMDB" id="EMD-22732"/>
<dbReference type="EMDB" id="EMD-22733"/>
<dbReference type="EMDB" id="EMD-22734"/>
<dbReference type="EMDB" id="EMD-22735"/>
<dbReference type="EMDB" id="EMD-22736"/>
<dbReference type="EMDB" id="EMD-22737"/>
<dbReference type="EMDB" id="EMD-22738"/>
<dbReference type="EMDB" id="EMD-22739"/>
<dbReference type="EMDB" id="EMD-22740"/>
<dbReference type="EMDB" id="EMD-22741"/>
<dbReference type="EMDB" id="EMD-22788"/>
<dbReference type="EMDB" id="EMD-22804"/>
<dbReference type="EMDB" id="EMD-22819"/>
<dbReference type="EMDB" id="EMD-22820"/>
<dbReference type="EMDB" id="EMD-22839"/>
<dbReference type="EMDB" id="EMD-22841"/>
<dbReference type="EMDB" id="EMD-22842"/>
<dbReference type="EMDB" id="EMD-22847"/>
<dbReference type="EMDB" id="EMD-22848"/>
<dbReference type="EMDB" id="EMD-22851"/>
<dbReference type="EMDB" id="EMD-22852"/>
<dbReference type="EMDB" id="EMD-22853"/>
<dbReference type="EMDB" id="EMD-22925"/>
<dbReference type="EMDB" id="EMD-22926"/>
<dbReference type="EMDB" id="EMD-23003"/>
<dbReference type="EMDB" id="EMD-23016"/>
<dbReference type="EMDB" id="EMD-23033"/>
<dbReference type="EMDB" id="EMD-23064"/>
<dbReference type="EMDB" id="EMD-23065"/>
<dbReference type="EMDB" id="EMD-23092"/>
<dbReference type="EMDB" id="EMD-23093"/>
<dbReference type="EMDB" id="EMD-23098"/>
<dbReference type="EMDB" id="EMD-23125"/>
<dbReference type="EMDB" id="EMD-23126"/>
<dbReference type="EMDB" id="EMD-23127"/>
<dbReference type="EMDB" id="EMD-23246"/>
<dbReference type="EMDB" id="EMD-23248"/>
<dbReference type="EMDB" id="EMD-23252"/>
<dbReference type="EMDB" id="EMD-23253"/>
<dbReference type="EMDB" id="EMD-23254"/>
<dbReference type="EMDB" id="EMD-23277"/>
<dbReference type="EMDB" id="EMD-23279"/>
<dbReference type="EMDB" id="EMD-23312"/>
<dbReference type="EMDB" id="EMD-23411"/>
<dbReference type="EMDB" id="EMD-23412"/>
<dbReference type="EMDB" id="EMD-23424"/>
<dbReference type="EMDB" id="EMD-23462"/>
<dbReference type="EMDB" id="EMD-23463"/>
<dbReference type="EMDB" id="EMD-23464"/>
<dbReference type="EMDB" id="EMD-23465"/>
<dbReference type="EMDB" id="EMD-23490"/>
<dbReference type="EMDB" id="EMD-23498"/>
<dbReference type="EMDB" id="EMD-23499"/>
<dbReference type="EMDB" id="EMD-23506"/>
<dbReference type="EMDB" id="EMD-23521"/>
<dbReference type="EMDB" id="EMD-23564"/>
<dbReference type="EMDB" id="EMD-23565"/>
<dbReference type="EMDB" id="EMD-23571"/>
<dbReference type="EMDB" id="EMD-23572"/>
<dbReference type="EMDB" id="EMD-23589"/>
<dbReference type="EMDB" id="EMD-23603"/>
<dbReference type="EMDB" id="EMD-23625"/>
<dbReference type="EMDB" id="EMD-23640"/>
<dbReference type="EMDB" id="EMD-23662"/>
<dbReference type="EMDB" id="EMD-23693"/>
<dbReference type="EMDB" id="EMD-23694"/>
<dbReference type="EMDB" id="EMD-23695"/>
<dbReference type="EMDB" id="EMD-23696"/>
<dbReference type="EMDB" id="EMD-23697"/>
<dbReference type="EMDB" id="EMD-23708"/>
<dbReference type="EMDB" id="EMD-23710"/>
<dbReference type="EMDB" id="EMD-23711"/>
<dbReference type="EMDB" id="EMD-23712"/>
<dbReference type="EMDB" id="EMD-23713"/>
<dbReference type="EMDB" id="EMD-23715"/>
<dbReference type="EMDB" id="EMD-23719"/>
<dbReference type="EMDB" id="EMD-23914"/>
<dbReference type="EMDB" id="EMD-23915"/>
<dbReference type="EMDB" id="EMD-23918"/>
<dbReference type="EMDB" id="EMD-23933"/>
<dbReference type="EMDB" id="EMD-23979"/>
<dbReference type="EMDB" id="EMD-23980"/>
<dbReference type="EMDB" id="EMD-24060"/>
<dbReference type="EMDB" id="EMD-24061"/>
<dbReference type="EMDB" id="EMD-24062"/>
<dbReference type="EMDB" id="EMD-24063"/>
<dbReference type="EMDB" id="EMD-24064"/>
<dbReference type="EMDB" id="EMD-24071"/>
<dbReference type="EMDB" id="EMD-24072"/>
<dbReference type="EMDB" id="EMD-24128"/>
<dbReference type="EMDB" id="EMD-24192"/>
<dbReference type="EMDB" id="EMD-24193"/>
<dbReference type="EMDB" id="EMD-24318"/>
<dbReference type="EMDB" id="EMD-24319"/>
<dbReference type="EMDB" id="EMD-24320"/>
<dbReference type="EMDB" id="EMD-24362"/>
<dbReference type="EMDB" id="EMD-24504"/>
<dbReference type="EMDB" id="EMD-24623"/>
<dbReference type="EMDB" id="EMD-24628"/>
<dbReference type="EMDB" id="EMD-24675"/>
<dbReference type="EMDB" id="EMD-24676"/>
<dbReference type="EMDB" id="EMD-24708"/>
<dbReference type="EMDB" id="EMD-24786"/>
<dbReference type="EMDB" id="EMD-24787"/>
<dbReference type="EMDB" id="EMD-24788"/>
<dbReference type="EMDB" id="EMD-24868"/>
<dbReference type="EMDB" id="EMD-24875"/>
<dbReference type="EMDB" id="EMD-25008"/>
<dbReference type="EMDB" id="EMD-25045"/>
<dbReference type="EMDB" id="EMD-25103"/>
<dbReference type="EMDB" id="EMD-25105"/>
<dbReference type="EMDB" id="EMD-25163"/>
<dbReference type="EMDB" id="EMD-25171"/>
<dbReference type="EMDB" id="EMD-25172"/>
<dbReference type="EMDB" id="EMD-25173"/>
<dbReference type="EMDB" id="EMD-25174"/>
<dbReference type="EMDB" id="EMD-25175"/>
<dbReference type="EMDB" id="EMD-25176"/>
<dbReference type="EMDB" id="EMD-25177"/>
<dbReference type="EMDB" id="EMD-25200"/>
<dbReference type="EMDB" id="EMD-25209"/>
<dbReference type="EMDB" id="EMD-25210"/>
<dbReference type="EMDB" id="EMD-25427"/>
<dbReference type="EMDB" id="EMD-25476"/>
<dbReference type="EMDB" id="EMD-25477"/>
<dbReference type="EMDB" id="EMD-25478"/>
<dbReference type="EMDB" id="EMD-25583"/>
<dbReference type="EMDB" id="EMD-25585"/>
<dbReference type="EMDB" id="EMD-25685"/>
<dbReference type="EMDB" id="EMD-25686"/>
<dbReference type="EMDB" id="EMD-25687"/>
<dbReference type="EMDB" id="EMD-25688"/>
<dbReference type="EMDB" id="EMD-25699"/>
<dbReference type="EMDB" id="EMD-25730"/>
<dbReference type="EMDB" id="EMD-25732"/>
<dbReference type="EMDB" id="EMD-25735"/>
<dbReference type="EMDB" id="EMD-25736"/>
<dbReference type="EMDB" id="EMD-25763"/>
<dbReference type="EMDB" id="EMD-25767"/>
<dbReference type="EMDB" id="EMD-25797"/>
<dbReference type="EMDB" id="EMD-25806"/>
<dbReference type="EMDB" id="EMD-25807"/>
<dbReference type="EMDB" id="EMD-25814"/>
<dbReference type="EMDB" id="EMD-25815"/>
<dbReference type="EMDB" id="EMD-25834"/>
<dbReference type="EMDB" id="EMD-25835"/>
<dbReference type="EMDB" id="EMD-25836"/>
<dbReference type="EMDB" id="EMD-25929"/>
<dbReference type="EMDB" id="EMD-25982"/>
<dbReference type="EMDB" id="EMD-26054"/>
<dbReference type="EMDB" id="EMD-26057"/>
<dbReference type="EMDB" id="EMD-26135"/>
<dbReference type="EMDB" id="EMD-26195"/>
<dbReference type="EMDB" id="EMD-26256"/>
<dbReference type="EMDB" id="EMD-26397"/>
<dbReference type="EMDB" id="EMD-26398"/>
<dbReference type="EMDB" id="EMD-26399"/>
<dbReference type="EMDB" id="EMD-26400"/>
<dbReference type="EMDB" id="EMD-26429"/>
<dbReference type="EMDB" id="EMD-26430"/>
<dbReference type="EMDB" id="EMD-26431"/>
<dbReference type="EMDB" id="EMD-26443"/>
<dbReference type="EMDB" id="EMD-26458"/>
<dbReference type="EMDB" id="EMD-26594"/>
<dbReference type="EMDB" id="EMD-26608"/>
<dbReference type="EMDB" id="EMD-26648"/>
<dbReference type="EMDB" id="EMD-26704"/>
<dbReference type="EMDB" id="EMD-26738"/>
<dbReference type="EMDB" id="EMD-27024"/>
<dbReference type="EMDB" id="EMD-27103"/>
<dbReference type="EMDB" id="EMD-27177"/>
<dbReference type="EMDB" id="EMD-27194"/>
<dbReference type="EMDB" id="EMD-27195"/>
<dbReference type="EMDB" id="EMD-27202"/>
<dbReference type="EMDB" id="EMD-27222"/>
<dbReference type="EMDB" id="EMD-27254"/>
<dbReference type="EMDB" id="EMD-27255"/>
<dbReference type="EMDB" id="EMD-27440"/>
<dbReference type="EMDB" id="EMD-27441"/>
<dbReference type="EMDB" id="EMD-27443"/>
<dbReference type="EMDB" id="EMD-27511"/>
<dbReference type="EMDB" id="EMD-27512"/>
<dbReference type="EMDB" id="EMD-27513"/>
<dbReference type="EMDB" id="EMD-27514"/>
<dbReference type="EMDB" id="EMD-27518"/>
<dbReference type="EMDB" id="EMD-27525"/>
<dbReference type="EMDB" id="EMD-27526"/>
<dbReference type="EMDB" id="EMD-27538"/>
<dbReference type="EMDB" id="EMD-27596"/>
<dbReference type="EMDB" id="EMD-27735"/>
<dbReference type="EMDB" id="EMD-27749"/>
<dbReference type="EMDB" id="EMD-27750"/>
<dbReference type="EMDB" id="EMD-27775"/>
<dbReference type="EMDB" id="EMD-27785"/>
<dbReference type="EMDB" id="EMD-27786"/>
<dbReference type="EMDB" id="EMD-27787"/>
<dbReference type="EMDB" id="EMD-27788"/>
<dbReference type="EMDB" id="EMD-27789"/>
<dbReference type="EMDB" id="EMD-27808"/>
<dbReference type="EMDB" id="EMD-27846"/>
<dbReference type="EMDB" id="EMD-27920"/>
<dbReference type="EMDB" id="EMD-27921"/>
<dbReference type="EMDB" id="EMD-27939"/>
<dbReference type="EMDB" id="EMD-27995"/>
<dbReference type="EMDB" id="EMD-28135"/>
<dbReference type="EMDB" id="EMD-28192"/>
<dbReference type="EMDB" id="EMD-28196"/>
<dbReference type="EMDB" id="EMD-28228"/>
<dbReference type="EMDB" id="EMD-28555"/>
<dbReference type="EMDB" id="EMD-28617"/>
<dbReference type="EMDB" id="EMD-28618"/>
<dbReference type="EMDB" id="EMD-28619"/>
<dbReference type="EMDB" id="EMD-28833"/>
<dbReference type="EMDB" id="EMD-28881"/>
<dbReference type="EMDB" id="EMD-28882"/>
<dbReference type="EMDB" id="EMD-28883"/>
<dbReference type="EMDB" id="EMD-28884"/>
<dbReference type="EMDB" id="EMD-28885"/>
<dbReference type="EMDB" id="EMD-29077"/>
<dbReference type="EMDB" id="EMD-29209"/>
<dbReference type="EMDB" id="EMD-29264"/>
<dbReference type="EMDB" id="EMD-29288"/>
<dbReference type="EMDB" id="EMD-29419"/>
<dbReference type="EMDB" id="EMD-29686"/>
<dbReference type="EMDB" id="EMD-29704"/>
<dbReference type="EMDB" id="EMD-29705"/>
<dbReference type="EMDB" id="EMD-29706"/>
<dbReference type="EMDB" id="EMD-29707"/>
<dbReference type="EMDB" id="EMD-29708"/>
<dbReference type="EMDB" id="EMD-29709"/>
<dbReference type="EMDB" id="EMD-29710"/>
<dbReference type="EMDB" id="EMD-29711"/>
<dbReference type="EMDB" id="EMD-29712"/>
<dbReference type="EMDB" id="EMD-29725"/>
<dbReference type="EMDB" id="EMD-29731"/>
<dbReference type="EMDB" id="EMD-29738"/>
<dbReference type="EMDB" id="EMD-29783"/>
<dbReference type="EMDB" id="EMD-29907"/>
<dbReference type="EMDB" id="EMD-29908"/>
<dbReference type="EMDB" id="EMD-29909"/>
<dbReference type="EMDB" id="EMD-29950"/>
<dbReference type="EMDB" id="EMD-30326"/>
<dbReference type="EMDB" id="EMD-30331"/>
<dbReference type="EMDB" id="EMD-30332"/>
<dbReference type="EMDB" id="EMD-30333"/>
<dbReference type="EMDB" id="EMD-30337"/>
<dbReference type="EMDB" id="EMD-30374"/>
<dbReference type="EMDB" id="EMD-30484"/>
<dbReference type="EMDB" id="EMD-30529"/>
<dbReference type="EMDB" id="EMD-30530"/>
<dbReference type="EMDB" id="EMD-30531"/>
<dbReference type="EMDB" id="EMD-30982"/>
<dbReference type="EMDB" id="EMD-30983"/>
<dbReference type="EMDB" id="EMD-30993"/>
<dbReference type="EMDB" id="EMD-30994"/>
<dbReference type="EMDB" id="EMD-31014"/>
<dbReference type="EMDB" id="EMD-31017"/>
<dbReference type="EMDB" id="EMD-31033"/>
<dbReference type="EMDB" id="EMD-31034"/>
<dbReference type="EMDB" id="EMD-31035"/>
<dbReference type="EMDB" id="EMD-31036"/>
<dbReference type="EMDB" id="EMD-31209"/>
<dbReference type="EMDB" id="EMD-31210"/>
<dbReference type="EMDB" id="EMD-31374"/>
<dbReference type="EMDB" id="EMD-31376"/>
<dbReference type="EMDB" id="EMD-31377"/>
<dbReference type="EMDB" id="EMD-31378"/>
<dbReference type="EMDB" id="EMD-31380"/>
<dbReference type="EMDB" id="EMD-31390"/>
<dbReference type="EMDB" id="EMD-31391"/>
<dbReference type="EMDB" id="EMD-31434"/>
<dbReference type="EMDB" id="EMD-31444"/>
<dbReference type="EMDB" id="EMD-31625"/>
<dbReference type="EMDB" id="EMD-31637"/>
<dbReference type="EMDB" id="EMD-31639"/>
<dbReference type="EMDB" id="EMD-31681"/>
<dbReference type="EMDB" id="EMD-31683"/>
<dbReference type="EMDB" id="EMD-31725"/>
<dbReference type="EMDB" id="EMD-31726"/>
<dbReference type="EMDB" id="EMD-31743"/>
<dbReference type="EMDB" id="EMD-31744"/>
<dbReference type="EMDB" id="EMD-32421"/>
<dbReference type="EMDB" id="EMD-32422"/>
<dbReference type="EMDB" id="EMD-32423"/>
<dbReference type="EMDB" id="EMD-32427"/>
<dbReference type="EMDB" id="EMD-32429"/>
<dbReference type="EMDB" id="EMD-32497"/>
<dbReference type="EMDB" id="EMD-32498"/>
<dbReference type="EMDB" id="EMD-32499"/>
<dbReference type="EMDB" id="EMD-32552"/>
<dbReference type="EMDB" id="EMD-32553"/>
<dbReference type="EMDB" id="EMD-32554"/>
<dbReference type="EMDB" id="EMD-32594"/>
<dbReference type="EMDB" id="EMD-32595"/>
<dbReference type="EMDB" id="EMD-32596"/>
<dbReference type="EMDB" id="EMD-32638"/>
<dbReference type="EMDB" id="EMD-32639"/>
<dbReference type="EMDB" id="EMD-32641"/>
<dbReference type="EMDB" id="EMD-32646"/>
<dbReference type="EMDB" id="EMD-32647"/>
<dbReference type="EMDB" id="EMD-32648"/>
<dbReference type="EMDB" id="EMD-32651"/>
<dbReference type="EMDB" id="EMD-32718"/>
<dbReference type="EMDB" id="EMD-32719"/>
<dbReference type="EMDB" id="EMD-32728"/>
<dbReference type="EMDB" id="EMD-32762"/>
<dbReference type="EMDB" id="EMD-32832"/>
<dbReference type="EMDB" id="EMD-32944"/>
<dbReference type="EMDB" id="EMD-32958"/>
<dbReference type="EMDB" id="EMD-32959"/>
<dbReference type="EMDB" id="EMD-32961"/>
<dbReference type="EMDB" id="EMD-32962"/>
<dbReference type="EMDB" id="EMD-32963"/>
<dbReference type="EMDB" id="EMD-33023"/>
<dbReference type="EMDB" id="EMD-33024"/>
<dbReference type="EMDB" id="EMD-33045"/>
<dbReference type="EMDB" id="EMD-33059"/>
<dbReference type="EMDB" id="EMD-33060"/>
<dbReference type="EMDB" id="EMD-33062"/>
<dbReference type="EMDB" id="EMD-33064"/>
<dbReference type="EMDB" id="EMD-33065"/>
<dbReference type="EMDB" id="EMD-33066"/>
<dbReference type="EMDB" id="EMD-33067"/>
<dbReference type="EMDB" id="EMD-33068"/>
<dbReference type="EMDB" id="EMD-33123"/>
<dbReference type="EMDB" id="EMD-33124"/>
<dbReference type="EMDB" id="EMD-33125"/>
<dbReference type="EMDB" id="EMD-33130"/>
<dbReference type="EMDB" id="EMD-33140"/>
<dbReference type="EMDB" id="EMD-33150"/>
<dbReference type="EMDB" id="EMD-33151"/>
<dbReference type="EMDB" id="EMD-33191"/>
<dbReference type="EMDB" id="EMD-33345"/>
<dbReference type="EMDB" id="EMD-33506"/>
<dbReference type="EMDB" id="EMD-33643"/>
<dbReference type="EMDB" id="EMD-33644"/>
<dbReference type="EMDB" id="EMD-33650"/>
<dbReference type="EMDB" id="EMD-33651"/>
<dbReference type="EMDB" id="EMD-33718"/>
<dbReference type="EMDB" id="EMD-33743"/>
<dbReference type="EMDB" id="EMD-33744"/>
<dbReference type="EMDB" id="EMD-33748"/>
<dbReference type="EMDB" id="EMD-33760"/>
<dbReference type="EMDB" id="EMD-33764"/>
<dbReference type="EMDB" id="EMD-33766"/>
<dbReference type="EMDB" id="EMD-33772"/>
<dbReference type="EMDB" id="EMD-33821"/>
<dbReference type="EMDB" id="EMD-33823"/>
<dbReference type="EMDB" id="EMD-33824"/>
<dbReference type="EMDB" id="EMD-33825"/>
<dbReference type="EMDB" id="EMD-33826"/>
<dbReference type="EMDB" id="EMD-33827"/>
<dbReference type="EMDB" id="EMD-33828"/>
<dbReference type="EMDB" id="EMD-33829"/>
<dbReference type="EMDB" id="EMD-33830"/>
<dbReference type="EMDB" id="EMD-34063"/>
<dbReference type="EMDB" id="EMD-34164"/>
<dbReference type="EMDB" id="EMD-34190"/>
<dbReference type="EMDB" id="EMD-34192"/>
<dbReference type="EMDB" id="EMD-34193"/>
<dbReference type="EMDB" id="EMD-34194"/>
<dbReference type="EMDB" id="EMD-34649"/>
<dbReference type="EMDB" id="EMD-34650"/>
<dbReference type="EMDB" id="EMD-34651"/>
<dbReference type="EMDB" id="EMD-34652"/>
<dbReference type="EMDB" id="EMD-34653"/>
<dbReference type="EMDB" id="EMD-34655"/>
<dbReference type="EMDB" id="EMD-34656"/>
<dbReference type="EMDB" id="EMD-34657"/>
<dbReference type="EMDB" id="EMD-34658"/>
<dbReference type="EMDB" id="EMD-34741"/>
<dbReference type="EMDB" id="EMD-34742"/>
<dbReference type="EMDB" id="EMD-34806"/>
<dbReference type="EMDB" id="EMD-34807"/>
<dbReference type="EMDB" id="EMD-34808"/>
<dbReference type="EMDB" id="EMD-34817"/>
<dbReference type="EMDB" id="EMD-34818"/>
<dbReference type="EMDB" id="EMD-34819"/>
<dbReference type="EMDB" id="EMD-34871"/>
<dbReference type="EMDB" id="EMD-34872"/>
<dbReference type="EMDB" id="EMD-34874"/>
<dbReference type="EMDB" id="EMD-34928"/>
<dbReference type="EMDB" id="EMD-34931"/>
<dbReference type="EMDB" id="EMD-34940"/>
<dbReference type="EMDB" id="EMD-34944"/>
<dbReference type="EMDB" id="EMD-34945"/>
<dbReference type="EMDB" id="EMD-34946"/>
<dbReference type="EMDB" id="EMD-35063"/>
<dbReference type="EMDB" id="EMD-35064"/>
<dbReference type="EMDB" id="EMD-35155"/>
<dbReference type="EMDB" id="EMD-35171"/>
<dbReference type="EMDB" id="EMD-35172"/>
<dbReference type="EMDB" id="EMD-35526"/>
<dbReference type="EMDB" id="EMD-35627"/>
<dbReference type="EMDB" id="EMD-35930"/>
<dbReference type="EMDB" id="EMD-35945"/>
<dbReference type="EMDB" id="EMD-36003"/>
<dbReference type="EMDB" id="EMD-36258"/>
<dbReference type="EMDB" id="EMD-36262"/>
<dbReference type="EMDB" id="EMD-36335"/>
<dbReference type="EMDB" id="EMD-36336"/>
<dbReference type="EMDB" id="EMD-36337"/>
<dbReference type="EMDB" id="EMD-36338"/>
<dbReference type="EMDB" id="EMD-36641"/>
<dbReference type="EMDB" id="EMD-36649"/>
<dbReference type="EMDB" id="EMD-36849"/>
<dbReference type="EMDB" id="EMD-36905"/>
<dbReference type="EMDB" id="EMD-36906"/>
<dbReference type="EMDB" id="EMD-37203"/>
<dbReference type="EMDB" id="EMD-37210"/>
<dbReference type="EMDB" id="EMD-37471"/>
<dbReference type="EMDB" id="EMD-37670"/>
<dbReference type="EMDB" id="EMD-37673"/>
<dbReference type="EMDB" id="EMD-37678"/>
<dbReference type="EMDB" id="EMD-37725"/>
<dbReference type="EMDB" id="EMD-37726"/>
<dbReference type="EMDB" id="EMD-37756"/>
<dbReference type="EMDB" id="EMD-37849"/>
<dbReference type="EMDB" id="EMD-38372"/>
<dbReference type="EMDB" id="EMD-38613"/>
<dbReference type="EMDB" id="EMD-38617"/>
<dbReference type="EMDB" id="EMD-38620"/>
<dbReference type="EMDB" id="EMD-38621"/>
<dbReference type="EMDB" id="EMD-38706"/>
<dbReference type="EMDB" id="EMD-38707"/>
<dbReference type="EMDB" id="EMD-38708"/>
<dbReference type="EMDB" id="EMD-38983"/>
<dbReference type="EMDB" id="EMD-39645"/>
<dbReference type="EMDB" id="EMD-39762"/>
<dbReference type="EMDB" id="EMD-39805"/>
<dbReference type="EMDB" id="EMD-39806"/>
<dbReference type="EMDB" id="EMD-39916"/>
<dbReference type="EMDB" id="EMD-39917"/>
<dbReference type="EMDB" id="EMD-39918"/>
<dbReference type="EMDB" id="EMD-39919"/>
<dbReference type="EMDB" id="EMD-39920"/>
<dbReference type="EMDB" id="EMD-39921"/>
<dbReference type="EMDB" id="EMD-39922"/>
<dbReference type="EMDB" id="EMD-39924"/>
<dbReference type="EMDB" id="EMD-40088"/>
<dbReference type="EMDB" id="EMD-40240"/>
<dbReference type="EMDB" id="EMD-40274"/>
<dbReference type="EMDB" id="EMD-40589"/>
<dbReference type="EMDB" id="EMD-40590"/>
<dbReference type="EMDB" id="EMD-40591"/>
<dbReference type="EMDB" id="EMD-40594"/>
<dbReference type="EMDB" id="EMD-40598"/>
<dbReference type="EMDB" id="EMD-40825"/>
<dbReference type="EMDB" id="EMD-41072"/>
<dbReference type="EMDB" id="EMD-41156"/>
<dbReference type="EMDB" id="EMD-41179"/>
<dbReference type="EMDB" id="EMD-41245"/>
<dbReference type="EMDB" id="EMD-41247"/>
<dbReference type="EMDB" id="EMD-41255"/>
<dbReference type="EMDB" id="EMD-41275"/>
<dbReference type="EMDB" id="EMD-41305"/>
<dbReference type="EMDB" id="EMD-41306"/>
<dbReference type="EMDB" id="EMD-41383"/>
<dbReference type="EMDB" id="EMD-41384"/>
<dbReference type="EMDB" id="EMD-41385"/>
<dbReference type="EMDB" id="EMD-41386"/>
<dbReference type="EMDB" id="EMD-41387"/>
<dbReference type="EMDB" id="EMD-41388"/>
<dbReference type="EMDB" id="EMD-41389"/>
<dbReference type="EMDB" id="EMD-41390"/>
<dbReference type="EMDB" id="EMD-41391"/>
<dbReference type="EMDB" id="EMD-41392"/>
<dbReference type="EMDB" id="EMD-41393"/>
<dbReference type="EMDB" id="EMD-41394"/>
<dbReference type="EMDB" id="EMD-41395"/>
<dbReference type="EMDB" id="EMD-41396"/>
<dbReference type="EMDB" id="EMD-41398"/>
<dbReference type="EMDB" id="EMD-41417"/>
<dbReference type="EMDB" id="EMD-41418"/>
<dbReference type="EMDB" id="EMD-41461"/>
<dbReference type="EMDB" id="EMD-41495"/>
<dbReference type="EMDB" id="EMD-41496"/>
<dbReference type="EMDB" id="EMD-41505"/>
<dbReference type="EMDB" id="EMD-41506"/>
<dbReference type="EMDB" id="EMD-41613"/>
<dbReference type="EMDB" id="EMD-41703"/>
<dbReference type="EMDB" id="EMD-41774"/>
<dbReference type="EMDB" id="EMD-41821"/>
<dbReference type="EMDB" id="EMD-41822"/>
<dbReference type="EMDB" id="EMD-41845"/>
<dbReference type="EMDB" id="EMD-41874"/>
<dbReference type="EMDB" id="EMD-41899"/>
<dbReference type="EMDB" id="EMD-42041"/>
<dbReference type="EMDB" id="EMD-42149"/>
<dbReference type="EMDB" id="EMD-42151"/>
<dbReference type="EMDB" id="EMD-42377"/>
<dbReference type="EMDB" id="EMD-42839"/>
<dbReference type="EMDB" id="EMD-43047"/>
<dbReference type="EMDB" id="EMD-43071"/>
<dbReference type="EMDB" id="EMD-43139"/>
<dbReference type="EMDB" id="EMD-43148"/>
<dbReference type="EMDB" id="EMD-43200"/>
<dbReference type="EMDB" id="EMD-43201"/>
<dbReference type="EMDB" id="EMD-43202"/>
<dbReference type="EMDB" id="EMD-43203"/>
<dbReference type="EMDB" id="EMD-43212"/>
<dbReference type="EMDB" id="EMD-43213"/>
<dbReference type="EMDB" id="EMD-43214"/>
<dbReference type="EMDB" id="EMD-43215"/>
<dbReference type="EMDB" id="EMD-43216"/>
<dbReference type="EMDB" id="EMD-43217"/>
<dbReference type="EMDB" id="EMD-43218"/>
<dbReference type="EMDB" id="EMD-43219"/>
<dbReference type="EMDB" id="EMD-43220"/>
<dbReference type="EMDB" id="EMD-43221"/>
<dbReference type="EMDB" id="EMD-43231"/>
<dbReference type="EMDB" id="EMD-43232"/>
<dbReference type="EMDB" id="EMD-43255"/>
<dbReference type="EMDB" id="EMD-43315"/>
<dbReference type="EMDB" id="EMD-43439"/>
<dbReference type="EMDB" id="EMD-43478"/>
<dbReference type="EMDB" id="EMD-43479"/>
<dbReference type="EMDB" id="EMD-43480"/>
<dbReference type="EMDB" id="EMD-43499"/>
<dbReference type="EMDB" id="EMD-43529"/>
<dbReference type="EMDB" id="EMD-43534"/>
<dbReference type="EMDB" id="EMD-43536"/>
<dbReference type="EMDB" id="EMD-43538"/>
<dbReference type="EMDB" id="EMD-43539"/>
<dbReference type="EMDB" id="EMD-43540"/>
<dbReference type="EMDB" id="EMD-43541"/>
<dbReference type="EMDB" id="EMD-43545"/>
<dbReference type="EMDB" id="EMD-43551"/>
<dbReference type="EMDB" id="EMD-43552"/>
<dbReference type="EMDB" id="EMD-43553"/>
<dbReference type="EMDB" id="EMD-43604"/>
<dbReference type="EMDB" id="EMD-43667"/>
<dbReference type="EMDB" id="EMD-43672"/>
<dbReference type="EMDB" id="EMD-43842"/>
<dbReference type="EMDB" id="EMD-43879"/>
<dbReference type="EMDB" id="EMD-43880"/>
<dbReference type="EMDB" id="EMD-43881"/>
<dbReference type="EMDB" id="EMD-44143"/>
<dbReference type="EMDB" id="EMD-44246"/>
<dbReference type="EMDB" id="EMD-44451"/>
<dbReference type="EMDB" id="EMD-44452"/>
<dbReference type="EMDB" id="EMD-44484"/>
<dbReference type="EMDB" id="EMD-44595"/>
<dbReference type="EMDB" id="EMD-44627"/>
<dbReference type="EMDB" id="EMD-44628"/>
<dbReference type="EMDB" id="EMD-44629"/>
<dbReference type="EMDB" id="EMD-4520"/>
<dbReference type="EMDB" id="EMD-4521"/>
<dbReference type="EMDB" id="EMD-45443"/>
<dbReference type="EMDB" id="EMD-45444"/>
<dbReference type="EMDB" id="EMD-45624"/>
<dbReference type="EMDB" id="EMD-45728"/>
<dbReference type="EMDB" id="EMD-45749"/>
<dbReference type="EMDB" id="EMD-46478"/>
<dbReference type="EMDB" id="EMD-46532"/>
<dbReference type="EMDB" id="EMD-46533"/>
<dbReference type="EMDB" id="EMD-46534"/>
<dbReference type="EMDB" id="EMD-47040"/>
<dbReference type="EMDB" id="EMD-47042"/>
<dbReference type="EMDB" id="EMD-47134"/>
<dbReference type="EMDB" id="EMD-47153"/>
<dbReference type="EMDB" id="EMD-47333"/>
<dbReference type="EMDB" id="EMD-47571"/>
<dbReference type="EMDB" id="EMD-48120"/>
<dbReference type="EMDB" id="EMD-48393"/>
<dbReference type="EMDB" id="EMD-48404"/>
<dbReference type="EMDB" id="EMD-60099"/>
<dbReference type="EMDB" id="EMD-60100"/>
<dbReference type="EMDB" id="EMD-60101"/>
<dbReference type="EMDB" id="EMD-60103"/>
<dbReference type="EMDB" id="EMD-60104"/>
<dbReference type="EMDB" id="EMD-60105"/>
<dbReference type="EMDB" id="EMD-60106"/>
<dbReference type="EMDB" id="EMD-60107"/>
<dbReference type="EMDB" id="EMD-60108"/>
<dbReference type="EMDB" id="EMD-60109"/>
<dbReference type="EMDB" id="EMD-60110"/>
<dbReference type="EMDB" id="EMD-60111"/>
<dbReference type="EMDB" id="EMD-60112"/>
<dbReference type="EMDB" id="EMD-60929"/>
<dbReference type="EMDB" id="EMD-60993"/>
<dbReference type="EMDB" id="EMD-61167"/>
<dbReference type="EMDB" id="EMD-61766"/>
<dbReference type="EMDB" id="EMD-62753"/>
<dbReference type="EMDB" id="EMD-63198"/>
<dbReference type="EMDB" id="EMD-7107"/>
<dbReference type="EMDB" id="EMD-7108"/>
<dbReference type="EMDB" id="EMD-7344"/>
<dbReference type="EMDB" id="EMD-7459"/>
<dbReference type="EMDB" id="EMD-7460"/>
<dbReference type="EMDB" id="EMD-7516"/>
<dbReference type="EMDB" id="EMD-7568"/>
<dbReference type="EMDB" id="EMD-7859"/>
<dbReference type="EMDB" id="EMD-7860"/>
<dbReference type="EMDB" id="EMD-7861"/>
<dbReference type="EMDB" id="EMD-7875"/>
<dbReference type="EMDB" id="EMD-7876"/>
<dbReference type="EMDB" id="EMD-8181"/>
<dbReference type="EMDB" id="EMD-8182"/>
<dbReference type="EMDB" id="EMD-8302"/>
<dbReference type="EMDB" id="EMD-8407"/>
<dbReference type="EMDB" id="EMD-8573"/>
<dbReference type="EMDB" id="EMD-8643"/>
<dbReference type="EMDB" id="EMD-8644"/>
<dbReference type="EMDB" id="EMD-8713"/>
<dbReference type="EMDB" id="EMD-8716"/>
<dbReference type="EMDB" id="EMD-8717"/>
<dbReference type="EMDB" id="EMD-8956"/>
<dbReference type="EMDB" id="EMD-8977"/>
<dbReference type="EMDB" id="EMD-8981"/>
<dbReference type="EMDB" id="EMD-9030"/>
<dbReference type="EMDB" id="EMD-9038"/>
<dbReference type="EMDB" id="EMD-9062"/>
<dbReference type="EMDB" id="EMD-9135"/>
<dbReference type="EMDB" id="EMD-9139"/>
<dbReference type="EMDB" id="EMD-9189"/>
<dbReference type="EMDB" id="EMD-9359"/>
<dbReference type="EMDB" id="EMD-9542"/>
<dbReference type="EMDB" id="EMD-9811"/>
<dbReference type="EMDB" id="EMD-9812"/>
<dbReference type="SASBDB" id="P01857"/>
<dbReference type="SMR" id="P01857"/>
<dbReference type="ComplexPortal" id="CPX-6929">
    <property type="entry name" value="IgG1 - Ig kappa immunoglobulin complex, constant regions"/>
</dbReference>
<dbReference type="ComplexPortal" id="CPX-6931">
    <property type="entry name" value="IgG1 - Ig lambda 1 immunoglobulin complex, constant regions"/>
</dbReference>
<dbReference type="ComplexPortal" id="CPX-6932">
    <property type="entry name" value="IgG1 - Ig lambda 2 immunoglobulin complex, constant regions"/>
</dbReference>
<dbReference type="ComplexPortal" id="CPX-6933">
    <property type="entry name" value="IgG1 - Ig lambda 3 immunoglobulin complex, constant regions"/>
</dbReference>
<dbReference type="ComplexPortal" id="CPX-6934">
    <property type="entry name" value="IgG1 - Ig lambda 6 immunoglobulin complex, constant regions"/>
</dbReference>
<dbReference type="ComplexPortal" id="CPX-6935">
    <property type="entry name" value="IgG1 - Ig lambda 7 immunoglobulin complex, constant regions"/>
</dbReference>
<dbReference type="CORUM" id="P01857"/>
<dbReference type="DIP" id="DIP-29187N"/>
<dbReference type="FunCoup" id="P01857">
    <property type="interactions" value="479"/>
</dbReference>
<dbReference type="IntAct" id="P01857">
    <property type="interactions" value="205"/>
</dbReference>
<dbReference type="MINT" id="P01857"/>
<dbReference type="BindingDB" id="P01857"/>
<dbReference type="DrugBank" id="DB07909">
    <property type="generic name" value="(1S,2S,5S)2-(4-GLUTARIDYLBENZYL)-5-PHENYL-1-CYCLOHEXANOL"/>
</dbReference>
<dbReference type="DrugBank" id="DB07883">
    <property type="generic name" value="(2-AMINO-3-PHENYL-BICYCLO[2.2.1]HEPT-2-YL)-PHENYL-METHANONE"/>
</dbReference>
<dbReference type="DrugBank" id="DB08294">
    <property type="generic name" value="2-(4-HYDROXY-3-NITROPHENYL)ACETIC ACID"/>
</dbReference>
<dbReference type="DrugBank" id="DB07371">
    <property type="generic name" value="3-(10-methyl-9-anthryl)propanoic acid"/>
</dbReference>
<dbReference type="DrugBank" id="DB07441">
    <property type="generic name" value="3-{[(9-CYANO-9,10-DIHYDRO-10-METHYLACRIDIN-9-YL)CARBONYL]AMINO}PROPANOIC ACID"/>
</dbReference>
<dbReference type="DrugBank" id="DB08562">
    <property type="generic name" value="4-(4-STYRYL-PHENYLCARBAMOYL)-BUTYRIC ACID"/>
</dbReference>
<dbReference type="DrugBank" id="DB08409">
    <property type="generic name" value="4-NITRO-BENZYLPHOSPHONOBUTANOYL-GLYCINE"/>
</dbReference>
<dbReference type="DrugBank" id="DB08296">
    <property type="generic name" value="5-(PARA-NITROPHENYL PHOSPHONATE)-PENTANOIC ACID"/>
</dbReference>
<dbReference type="DrugBank" id="DB08412">
    <property type="generic name" value="6-{4-[HYDROXY-(4-NITRO-PHENOXY)-PHOSPHORYL]-BUTYRYLAMINO}-HEXANOIC ACID"/>
</dbReference>
<dbReference type="DrugBank" id="DB08332">
    <property type="generic name" value="9-(2-carboxyethyl)-10-methylanthracene endoperoxide"/>
</dbReference>
<dbReference type="DrugBank" id="DB04473">
    <property type="generic name" value="alpha-L-fucose"/>
</dbReference>
<dbReference type="DrugBank" id="DB04639">
    <property type="generic name" value="Biphenylalanine"/>
</dbReference>
<dbReference type="DrugBank" id="DB09130">
    <property type="generic name" value="Copper"/>
</dbReference>
<dbReference type="DrugBank" id="DB07375">
    <property type="generic name" value="Etiocholanedione"/>
</dbReference>
<dbReference type="DrugBank" id="DB07764">
    <property type="generic name" value="Fluorescin"/>
</dbReference>
<dbReference type="DrugBank" id="DB15258">
    <property type="generic name" value="Imlifidase"/>
</dbReference>
<dbReference type="DrugBank" id="DB01631">
    <property type="generic name" value="Methyl nonanoate"/>
</dbReference>
<dbReference type="DrugBank" id="DB07816">
    <property type="generic name" value="N-(P-CYANOPHENYL)-N'-DIPHENYLMETHYL-GUANIDINE-ACETIC ACID"/>
</dbReference>
<dbReference type="DrugBank" id="DB08377">
    <property type="generic name" value="N-[4-(4-nitrophenylphospho)butanoyl]-D-alanine"/>
</dbReference>
<dbReference type="DrugBank" id="DB08411">
    <property type="generic name" value="N-[4-(4-nitrophenylphospho)butanoyl]-L-alanine"/>
</dbReference>
<dbReference type="DrugBank" id="DB03740">
    <property type="generic name" value="N-acetyl-alpha-D-glucosamine"/>
</dbReference>
<dbReference type="DrugBank" id="DB07881">
    <property type="generic name" value="N-{[2-({[1-(4-CARBOXYBUTANOYL)AMINO]-2-PHENYLETHYL}-HYDROXYPHOSPHINYL)OXY]ACETYL}-2-PHENYLETHYLAMINE"/>
</dbReference>
<dbReference type="DrugBank" id="DB08410">
    <property type="generic name" value="PARA-NITROBENZYL GLUTARYL GLYCINIC ACID"/>
</dbReference>
<dbReference type="DrugBank" id="DB08394">
    <property type="generic name" value="PARA-NITROPHENYLPHOSPHONOBUTANOYL-GLYCINE"/>
</dbReference>
<dbReference type="DrugBank" id="DB07672">
    <property type="generic name" value="TRANS-2-(DIMETHYLPHENYLSILYL)-PIPERIDINE-N-OXIDE"/>
</dbReference>
<dbReference type="DrugCentral" id="P01857"/>
<dbReference type="IMGT_GENE-DB" id="IGHG1"/>
<dbReference type="CarbonylDB" id="P01857"/>
<dbReference type="GlyConnect" id="233">
    <property type="glycosylation" value="111 N-Linked glycans"/>
</dbReference>
<dbReference type="GlyConnect" id="2976">
    <property type="glycosylation" value="4 N-Linked glycans"/>
</dbReference>
<dbReference type="GlyConnect" id="2977">
    <property type="glycosylation" value="5 N-Linked glycans (1 site)"/>
</dbReference>
<dbReference type="GlyConnect" id="2980">
    <property type="glycosylation" value="6 N-Linked glycans"/>
</dbReference>
<dbReference type="GlyConnect" id="2981">
    <property type="glycosylation" value="9 N-Linked glycans"/>
</dbReference>
<dbReference type="GlyConnect" id="2982">
    <property type="glycosylation" value="17 N-Linked glycans"/>
</dbReference>
<dbReference type="GlyConnect" id="2983">
    <property type="glycosylation" value="9 N-Linked glycans"/>
</dbReference>
<dbReference type="GlyConnect" id="2984">
    <property type="glycosylation" value="12 N-Linked glycans"/>
</dbReference>
<dbReference type="GlyConnect" id="2985">
    <property type="glycosylation" value="8 N-Linked glycans"/>
</dbReference>
<dbReference type="GlyConnect" id="3002">
    <property type="glycosylation" value="1 N-Linked glycan"/>
</dbReference>
<dbReference type="GlyConnect" id="671">
    <property type="glycosylation" value="128 N-Linked glycans (2 sites)"/>
</dbReference>
<dbReference type="GlyCosmos" id="P01857">
    <property type="glycosylation" value="1 site, 170 glycans"/>
</dbReference>
<dbReference type="GlyGen" id="P01857">
    <property type="glycosylation" value="2 sites, 198 N-linked glycans (2 sites), 1 N-linked;o-linked glycan (1 site), 1 O-linked glycan (1 site)"/>
</dbReference>
<dbReference type="iPTMnet" id="P01857"/>
<dbReference type="MetOSite" id="P01857"/>
<dbReference type="PhosphoSitePlus" id="P01857"/>
<dbReference type="SwissPalm" id="P01857"/>
<dbReference type="BioMuta" id="IGHG1"/>
<dbReference type="DMDM" id="121039"/>
<dbReference type="REPRODUCTION-2DPAGE" id="P01857"/>
<dbReference type="CPTAC" id="CPTAC-669"/>
<dbReference type="jPOST" id="P01857"/>
<dbReference type="MassIVE" id="P01857"/>
<dbReference type="PRIDE" id="P01857"/>
<dbReference type="ProteomicsDB" id="51494"/>
<dbReference type="Pumba" id="P01857"/>
<dbReference type="ABCD" id="P01857">
    <property type="antibodies" value="7 sequenced antibodies"/>
</dbReference>
<dbReference type="Ensembl" id="ENST00000390548.6">
    <molecule id="P01857-2"/>
    <property type="protein sequence ID" value="ENSP00000374990.2"/>
    <property type="gene ID" value="ENSG00000211896.7"/>
</dbReference>
<dbReference type="Ensembl" id="ENST00000390549.6">
    <molecule id="P01857-1"/>
    <property type="protein sequence ID" value="ENSP00000374991.2"/>
    <property type="gene ID" value="ENSG00000211896.7"/>
</dbReference>
<dbReference type="Ensembl" id="ENST00000631466.1">
    <molecule id="P01857-1"/>
    <property type="protein sequence ID" value="ENSP00000488387.1"/>
    <property type="gene ID" value="ENSG00000277633.5"/>
</dbReference>
<dbReference type="Ensembl" id="ENST00000631539.1">
    <molecule id="P01857-2"/>
    <property type="protein sequence ID" value="ENSP00000487867.1"/>
    <property type="gene ID" value="ENSG00000277633.5"/>
</dbReference>
<dbReference type="UCSC" id="uc059gdc.1">
    <molecule id="P01857-2"/>
    <property type="organism name" value="human"/>
</dbReference>
<dbReference type="AGR" id="HGNC:5525"/>
<dbReference type="GeneCards" id="IGHG1"/>
<dbReference type="HGNC" id="HGNC:5525">
    <property type="gene designation" value="IGHG1"/>
</dbReference>
<dbReference type="HPA" id="ENSG00000211896">
    <property type="expression patterns" value="Group enriched (lymphoid tissue, urinary bladder)"/>
</dbReference>
<dbReference type="MalaCards" id="IGHG1"/>
<dbReference type="MIM" id="147100">
    <property type="type" value="gene"/>
</dbReference>
<dbReference type="MIM" id="254500">
    <property type="type" value="phenotype"/>
</dbReference>
<dbReference type="neXtProt" id="NX_P01857"/>
<dbReference type="OpenTargets" id="ENSG00000211896"/>
<dbReference type="Orphanet" id="67038">
    <property type="disease" value="B-cell chronic lymphocytic leukemia"/>
</dbReference>
<dbReference type="Orphanet" id="536">
    <property type="disease" value="Systemic lupus erythematosus"/>
</dbReference>
<dbReference type="VEuPathDB" id="HostDB:ENSG00000211896"/>
<dbReference type="GeneTree" id="ENSGT00940000162793"/>
<dbReference type="HOGENOM" id="CLU_030625_0_0_1"/>
<dbReference type="InParanoid" id="P01857"/>
<dbReference type="OMA" id="DENCAEA"/>
<dbReference type="OrthoDB" id="8694217at2759"/>
<dbReference type="PAN-GO" id="P01857">
    <property type="GO annotations" value="11 GO annotations based on evolutionary models"/>
</dbReference>
<dbReference type="PhylomeDB" id="P01857"/>
<dbReference type="PathwayCommons" id="P01857"/>
<dbReference type="Reactome" id="R-HSA-166663">
    <property type="pathway name" value="Initial triggering of complement"/>
</dbReference>
<dbReference type="Reactome" id="R-HSA-173623">
    <property type="pathway name" value="Classical antibody-mediated complement activation"/>
</dbReference>
<dbReference type="Reactome" id="R-HSA-2029481">
    <property type="pathway name" value="FCGR activation"/>
</dbReference>
<dbReference type="Reactome" id="R-HSA-2029482">
    <property type="pathway name" value="Regulation of actin dynamics for phagocytic cup formation"/>
</dbReference>
<dbReference type="Reactome" id="R-HSA-2029485">
    <property type="pathway name" value="Role of phospholipids in phagocytosis"/>
</dbReference>
<dbReference type="Reactome" id="R-HSA-6785807">
    <property type="pathway name" value="Interleukin-4 and Interleukin-13 signaling"/>
</dbReference>
<dbReference type="Reactome" id="R-HSA-9664323">
    <property type="pathway name" value="FCGR3A-mediated IL10 synthesis"/>
</dbReference>
<dbReference type="Reactome" id="R-HSA-9664422">
    <property type="pathway name" value="FCGR3A-mediated phagocytosis"/>
</dbReference>
<dbReference type="Reactome" id="R-HSA-977606">
    <property type="pathway name" value="Regulation of Complement cascade"/>
</dbReference>
<dbReference type="SignaLink" id="P01857"/>
<dbReference type="ChiTaRS" id="IGHG1">
    <property type="organism name" value="human"/>
</dbReference>
<dbReference type="EvolutionaryTrace" id="P01857"/>
<dbReference type="Pharos" id="P01857">
    <property type="development level" value="Tclin"/>
</dbReference>
<dbReference type="PRO" id="PR:P01857"/>
<dbReference type="Proteomes" id="UP000005640">
    <property type="component" value="Chromosome 14"/>
</dbReference>
<dbReference type="RNAct" id="P01857">
    <property type="molecule type" value="protein"/>
</dbReference>
<dbReference type="Bgee" id="ENSG00000211896">
    <property type="expression patterns" value="Expressed in spleen and 94 other cell types or tissues"/>
</dbReference>
<dbReference type="ExpressionAtlas" id="P01857">
    <property type="expression patterns" value="baseline and differential"/>
</dbReference>
<dbReference type="GO" id="GO:0072562">
    <property type="term" value="C:blood microparticle"/>
    <property type="evidence" value="ECO:0007005"/>
    <property type="project" value="UniProtKB"/>
</dbReference>
<dbReference type="GO" id="GO:0070062">
    <property type="term" value="C:extracellular exosome"/>
    <property type="evidence" value="ECO:0007005"/>
    <property type="project" value="UniProtKB"/>
</dbReference>
<dbReference type="GO" id="GO:0005576">
    <property type="term" value="C:extracellular region"/>
    <property type="evidence" value="ECO:0000304"/>
    <property type="project" value="Reactome"/>
</dbReference>
<dbReference type="GO" id="GO:0005615">
    <property type="term" value="C:extracellular space"/>
    <property type="evidence" value="ECO:0000314"/>
    <property type="project" value="UniProtKB"/>
</dbReference>
<dbReference type="GO" id="GO:0071735">
    <property type="term" value="C:IgG immunoglobulin complex"/>
    <property type="evidence" value="ECO:0000353"/>
    <property type="project" value="ComplexPortal"/>
</dbReference>
<dbReference type="GO" id="GO:0042571">
    <property type="term" value="C:immunoglobulin complex, circulating"/>
    <property type="evidence" value="ECO:0000318"/>
    <property type="project" value="GO_Central"/>
</dbReference>
<dbReference type="GO" id="GO:0005886">
    <property type="term" value="C:plasma membrane"/>
    <property type="evidence" value="ECO:0000303"/>
    <property type="project" value="ComplexPortal"/>
</dbReference>
<dbReference type="GO" id="GO:0003823">
    <property type="term" value="F:antigen binding"/>
    <property type="evidence" value="ECO:0000318"/>
    <property type="project" value="GO_Central"/>
</dbReference>
<dbReference type="GO" id="GO:0034988">
    <property type="term" value="F:Fc-gamma receptor I complex binding"/>
    <property type="evidence" value="ECO:0000314"/>
    <property type="project" value="UniProtKB"/>
</dbReference>
<dbReference type="GO" id="GO:0034987">
    <property type="term" value="F:immunoglobulin receptor binding"/>
    <property type="evidence" value="ECO:0000318"/>
    <property type="project" value="GO_Central"/>
</dbReference>
<dbReference type="GO" id="GO:0002250">
    <property type="term" value="P:adaptive immune response"/>
    <property type="evidence" value="ECO:0000314"/>
    <property type="project" value="ComplexPortal"/>
</dbReference>
<dbReference type="GO" id="GO:0019731">
    <property type="term" value="P:antibacterial humoral response"/>
    <property type="evidence" value="ECO:0000318"/>
    <property type="project" value="GO_Central"/>
</dbReference>
<dbReference type="GO" id="GO:0001788">
    <property type="term" value="P:antibody-dependent cellular cytotoxicity"/>
    <property type="evidence" value="ECO:0000314"/>
    <property type="project" value="UniProtKB"/>
</dbReference>
<dbReference type="GO" id="GO:0050853">
    <property type="term" value="P:B cell receptor signaling pathway"/>
    <property type="evidence" value="ECO:0000303"/>
    <property type="project" value="ComplexPortal"/>
</dbReference>
<dbReference type="GO" id="GO:0006958">
    <property type="term" value="P:complement activation, classical pathway"/>
    <property type="evidence" value="ECO:0000318"/>
    <property type="project" value="GO_Central"/>
</dbReference>
<dbReference type="GO" id="GO:0097278">
    <property type="term" value="P:complement-dependent cytotoxicity"/>
    <property type="evidence" value="ECO:0000314"/>
    <property type="project" value="UniProtKB"/>
</dbReference>
<dbReference type="CDD" id="cd21817">
    <property type="entry name" value="IgC1_CH1_IgEG"/>
    <property type="match status" value="1"/>
</dbReference>
<dbReference type="CDD" id="cd05768">
    <property type="entry name" value="IgC1_CH3_IgAGD_CH4_IgAEM"/>
    <property type="match status" value="1"/>
</dbReference>
<dbReference type="FunFam" id="2.60.40.10:FF:000463">
    <property type="entry name" value="Immunoglobulin heavy constant gamma 1"/>
    <property type="match status" value="1"/>
</dbReference>
<dbReference type="FunFam" id="2.60.40.10:FF:001129">
    <property type="entry name" value="Immunoglobulin heavy constant gamma 1"/>
    <property type="match status" value="1"/>
</dbReference>
<dbReference type="FunFam" id="2.60.40.10:FF:001540">
    <property type="entry name" value="Immunoglobulin heavy constant gamma 1"/>
    <property type="match status" value="1"/>
</dbReference>
<dbReference type="Gene3D" id="2.60.40.10">
    <property type="entry name" value="Immunoglobulins"/>
    <property type="match status" value="3"/>
</dbReference>
<dbReference type="InterPro" id="IPR007110">
    <property type="entry name" value="Ig-like_dom"/>
</dbReference>
<dbReference type="InterPro" id="IPR036179">
    <property type="entry name" value="Ig-like_dom_sf"/>
</dbReference>
<dbReference type="InterPro" id="IPR013783">
    <property type="entry name" value="Ig-like_fold"/>
</dbReference>
<dbReference type="InterPro" id="IPR003006">
    <property type="entry name" value="Ig/MHC_CS"/>
</dbReference>
<dbReference type="InterPro" id="IPR003597">
    <property type="entry name" value="Ig_C1-set"/>
</dbReference>
<dbReference type="InterPro" id="IPR050380">
    <property type="entry name" value="Immune_Resp_Modulators"/>
</dbReference>
<dbReference type="PANTHER" id="PTHR23411">
    <property type="entry name" value="TAPASIN"/>
    <property type="match status" value="1"/>
</dbReference>
<dbReference type="Pfam" id="PF07654">
    <property type="entry name" value="C1-set"/>
    <property type="match status" value="3"/>
</dbReference>
<dbReference type="SMART" id="SM00407">
    <property type="entry name" value="IGc1"/>
    <property type="match status" value="3"/>
</dbReference>
<dbReference type="SUPFAM" id="SSF48726">
    <property type="entry name" value="Immunoglobulin"/>
    <property type="match status" value="3"/>
</dbReference>
<dbReference type="PROSITE" id="PS50835">
    <property type="entry name" value="IG_LIKE"/>
    <property type="match status" value="3"/>
</dbReference>
<dbReference type="PROSITE" id="PS00290">
    <property type="entry name" value="IG_MHC"/>
    <property type="match status" value="2"/>
</dbReference>
<proteinExistence type="evidence at protein level"/>
<protein>
    <recommendedName>
        <fullName evidence="13 19">Immunoglobulin heavy constant gamma 1</fullName>
    </recommendedName>
    <alternativeName>
        <fullName evidence="20">Ig gamma-1 chain C region</fullName>
    </alternativeName>
    <alternativeName>
        <fullName evidence="21 22">Ig gamma-1 chain C region EU</fullName>
    </alternativeName>
    <alternativeName>
        <fullName evidence="23">Ig gamma-1 chain C region KOL</fullName>
    </alternativeName>
    <alternativeName>
        <fullName evidence="24">Ig gamma-1 chain C region NIE</fullName>
    </alternativeName>
</protein>
<name>IGHG1_HUMAN</name>